<name>MP2K1_HUMAN</name>
<feature type="chain" id="PRO_0000086365" description="Dual specificity mitogen-activated protein kinase kinase 1">
    <location>
        <begin position="1"/>
        <end position="393"/>
    </location>
</feature>
<feature type="domain" description="Protein kinase" evidence="5">
    <location>
        <begin position="68"/>
        <end position="361"/>
    </location>
</feature>
<feature type="region of interest" description="Disordered" evidence="7">
    <location>
        <begin position="1"/>
        <end position="27"/>
    </location>
</feature>
<feature type="region of interest" description="RAF1-binding" evidence="26">
    <location>
        <begin position="270"/>
        <end position="307"/>
    </location>
</feature>
<feature type="active site" description="Proton acceptor" evidence="5 6">
    <location>
        <position position="190"/>
    </location>
</feature>
<feature type="binding site" evidence="5 11 16 19 20 23 27">
    <location>
        <begin position="74"/>
        <end position="82"/>
    </location>
    <ligand>
        <name>ATP</name>
        <dbReference type="ChEBI" id="CHEBI:30616"/>
    </ligand>
</feature>
<feature type="binding site" evidence="5 11 16 19 20 23 27">
    <location>
        <position position="97"/>
    </location>
    <ligand>
        <name>ATP</name>
        <dbReference type="ChEBI" id="CHEBI:30616"/>
    </ligand>
</feature>
<feature type="binding site" evidence="21 48">
    <location>
        <position position="97"/>
    </location>
    <ligand>
        <name>U0126</name>
        <dbReference type="ChEBI" id="CHEBI:90693"/>
        <note>inhibitor</note>
    </ligand>
</feature>
<feature type="binding site" evidence="5 11 16 19 20 23 27">
    <location>
        <begin position="143"/>
        <end position="146"/>
    </location>
    <ligand>
        <name>ATP</name>
        <dbReference type="ChEBI" id="CHEBI:30616"/>
    </ligand>
</feature>
<feature type="binding site" evidence="21 46">
    <location>
        <begin position="144"/>
        <end position="146"/>
    </location>
    <ligand>
        <name>K-252a</name>
        <dbReference type="ChEBI" id="CHEBI:43616"/>
        <note>inhibitor</note>
    </ligand>
</feature>
<feature type="binding site" evidence="5 11 16 19 20 23 27">
    <location>
        <begin position="150"/>
        <end position="153"/>
    </location>
    <ligand>
        <name>ATP</name>
        <dbReference type="ChEBI" id="CHEBI:30616"/>
    </ligand>
</feature>
<feature type="binding site" evidence="5 11 16 19 20 23 27">
    <location>
        <begin position="192"/>
        <end position="195"/>
    </location>
    <ligand>
        <name>ATP</name>
        <dbReference type="ChEBI" id="CHEBI:30616"/>
    </ligand>
</feature>
<feature type="binding site" evidence="21 46">
    <location>
        <position position="194"/>
    </location>
    <ligand>
        <name>K-252a</name>
        <dbReference type="ChEBI" id="CHEBI:43616"/>
        <note>inhibitor</note>
    </ligand>
</feature>
<feature type="binding site" evidence="21 48">
    <location>
        <begin position="208"/>
        <end position="211"/>
    </location>
    <ligand>
        <name>U0126</name>
        <dbReference type="ChEBI" id="CHEBI:90693"/>
        <note>inhibitor</note>
    </ligand>
</feature>
<feature type="binding site" evidence="5 11 16 19 20 23 27">
    <location>
        <position position="208"/>
    </location>
    <ligand>
        <name>ATP</name>
        <dbReference type="ChEBI" id="CHEBI:30616"/>
    </ligand>
</feature>
<feature type="site" description="Cleavage; by anthrax lethal factor">
    <location>
        <begin position="8"/>
        <end position="9"/>
    </location>
</feature>
<feature type="modified residue" description="Phosphoserine; by BRAF and RAF1" evidence="8 26 29 34">
    <location>
        <position position="218"/>
    </location>
</feature>
<feature type="modified residue" description="Phosphoserine; by BRAF and RAF1" evidence="26 29 34">
    <location>
        <position position="222"/>
    </location>
</feature>
<feature type="modified residue" description="Phosphothreonine" evidence="54">
    <location>
        <position position="286"/>
    </location>
</feature>
<feature type="modified residue" description="Phosphothreonine; by MAPK1" evidence="4">
    <location>
        <position position="292"/>
    </location>
</feature>
<feature type="modified residue" description="Phosphoserine; by PAK" evidence="12">
    <location>
        <position position="298"/>
    </location>
</feature>
<feature type="splice variant" id="VSP_040500" description="In isoform 2." evidence="35">
    <location>
        <begin position="147"/>
        <end position="172"/>
    </location>
</feature>
<feature type="sequence variant" id="VAR_035093" description="In CFC3; dbSNP:rs121908594." evidence="13">
    <original>F</original>
    <variation>S</variation>
    <location>
        <position position="53"/>
    </location>
</feature>
<feature type="sequence variant" id="VAR_084452" description="In MEL; somatic mutation; dbSNP:rs1057519729." evidence="30">
    <original>Q</original>
    <variation>P</variation>
    <location>
        <position position="56"/>
    </location>
</feature>
<feature type="sequence variant" id="VAR_084453" description="In MEL; somatic mutation; dbSNP:rs397516790." evidence="30">
    <original>K</original>
    <variation>E</variation>
    <location>
        <position position="57"/>
    </location>
</feature>
<feature type="sequence variant" id="VAR_084454" description="In MEL; somatic mutation; results in increased MAPK signal transduction; dbSNP:rs869025608." evidence="30">
    <original>K</original>
    <variation>N</variation>
    <location>
        <position position="57"/>
    </location>
</feature>
<feature type="sequence variant" id="VAR_069780" description="In CFC3; dbSNP:rs121908596." evidence="17">
    <original>G</original>
    <variation>V</variation>
    <location>
        <position position="128"/>
    </location>
</feature>
<feature type="sequence variant" id="VAR_035094" description="In CFC3; dbSNP:rs121908595." evidence="13">
    <original>Y</original>
    <variation>C</variation>
    <location>
        <position position="130"/>
    </location>
</feature>
<feature type="mutagenesis site" description="Loss of catalytic activity. Strongly reduces phosphorylation upon UV irradiation." evidence="26">
    <original>K</original>
    <variation>A</variation>
    <location>
        <position position="97"/>
    </location>
</feature>
<feature type="mutagenesis site" description="Loss of catalytic activity. No effect on BRAF-KSR1 or BRAF-KSR2 dimerization." evidence="29 34">
    <original>K</original>
    <variation>R</variation>
    <location>
        <position position="97"/>
    </location>
</feature>
<feature type="mutagenesis site" description="No loss of activity." evidence="34">
    <original>S</original>
    <variation>A</variation>
    <location>
        <position position="150"/>
    </location>
</feature>
<feature type="mutagenesis site" description="No loss of activity." evidence="34">
    <original>S</original>
    <variation>A</variation>
    <location>
        <position position="212"/>
    </location>
</feature>
<feature type="mutagenesis site" description="Loss of catalytic activity. No effect on BRAF-KSR1 dimerization; when associated with A-222." evidence="29 34">
    <original>S</original>
    <variation>A</variation>
    <location>
        <position position="218"/>
    </location>
</feature>
<feature type="mutagenesis site" description="No effect on BRAF-KSR1 dimerization; when associated with D-222." evidence="29">
    <original>S</original>
    <variation>D</variation>
    <location>
        <position position="218"/>
    </location>
</feature>
<feature type="mutagenesis site" description="Increases interaction with KSR1 and BRAF." evidence="29">
    <original>M</original>
    <variation>V</variation>
    <location>
        <position position="219"/>
    </location>
</feature>
<feature type="mutagenesis site" description="Increases interaction with KSR1 and BRAF; when associated with L-220." evidence="29">
    <original>M</original>
    <variation>W</variation>
    <location>
        <position position="219"/>
    </location>
</feature>
<feature type="mutagenesis site" description="Increases interaction with KSR1 and BRAF; when associated with w-219." evidence="29">
    <original>A</original>
    <variation>L</variation>
    <location>
        <position position="220"/>
    </location>
</feature>
<feature type="mutagenesis site" description="Increases interaction with KSR1 and BRAF." evidence="29">
    <original>N</original>
    <variation>Y</variation>
    <location>
        <position position="221"/>
    </location>
</feature>
<feature type="mutagenesis site" description="Loss of catalytic activity. No effect on BRAF-KSR1 dimerization; when associated with A-218." evidence="29 34">
    <original>S</original>
    <variation>A</variation>
    <location>
        <position position="222"/>
    </location>
</feature>
<feature type="mutagenesis site" description="No effect on BRAF-KSR1 dimerization; when associated with D-218." evidence="29">
    <original>S</original>
    <variation>D</variation>
    <location>
        <position position="222"/>
    </location>
</feature>
<feature type="mutagenesis site" description="Loss of interaction with BRAF and KSR1. Loss of BRAF-KSR1 dimerization." evidence="29">
    <original>F</original>
    <variation>S</variation>
    <location>
        <position position="311"/>
    </location>
</feature>
<feature type="sequence conflict" description="In Ref. 3; AA sequence." evidence="36" ref="3">
    <original>A</original>
    <variation>R</variation>
    <location>
        <position position="52"/>
    </location>
</feature>
<feature type="sequence conflict" description="In Ref. 3; AA sequence." evidence="36" ref="3">
    <location>
        <position position="180"/>
    </location>
</feature>
<feature type="helix" evidence="60">
    <location>
        <begin position="38"/>
        <end position="40"/>
    </location>
</feature>
<feature type="helix" evidence="60">
    <location>
        <begin position="44"/>
        <end position="57"/>
    </location>
</feature>
<feature type="turn" evidence="58">
    <location>
        <begin position="58"/>
        <end position="60"/>
    </location>
</feature>
<feature type="helix" evidence="60">
    <location>
        <begin position="65"/>
        <end position="67"/>
    </location>
</feature>
<feature type="strand" evidence="60">
    <location>
        <begin position="68"/>
        <end position="76"/>
    </location>
</feature>
<feature type="strand" evidence="60">
    <location>
        <begin position="78"/>
        <end position="87"/>
    </location>
</feature>
<feature type="turn" evidence="60">
    <location>
        <begin position="88"/>
        <end position="91"/>
    </location>
</feature>
<feature type="strand" evidence="60">
    <location>
        <begin position="92"/>
        <end position="100"/>
    </location>
</feature>
<feature type="helix" evidence="60">
    <location>
        <begin position="105"/>
        <end position="115"/>
    </location>
</feature>
<feature type="helix" evidence="60">
    <location>
        <begin position="116"/>
        <end position="120"/>
    </location>
</feature>
<feature type="strand" evidence="60">
    <location>
        <begin position="129"/>
        <end position="135"/>
    </location>
</feature>
<feature type="strand" evidence="60">
    <location>
        <begin position="138"/>
        <end position="144"/>
    </location>
</feature>
<feature type="helix" evidence="60">
    <location>
        <begin position="151"/>
        <end position="158"/>
    </location>
</feature>
<feature type="helix" evidence="60">
    <location>
        <begin position="163"/>
        <end position="184"/>
    </location>
</feature>
<feature type="helix" evidence="60">
    <location>
        <begin position="193"/>
        <end position="195"/>
    </location>
</feature>
<feature type="strand" evidence="60">
    <location>
        <begin position="196"/>
        <end position="198"/>
    </location>
</feature>
<feature type="turn" evidence="55">
    <location>
        <begin position="200"/>
        <end position="202"/>
    </location>
</feature>
<feature type="strand" evidence="60">
    <location>
        <begin position="204"/>
        <end position="206"/>
    </location>
</feature>
<feature type="helix" evidence="60">
    <location>
        <begin position="213"/>
        <end position="218"/>
    </location>
</feature>
<feature type="helix" evidence="57">
    <location>
        <begin position="221"/>
        <end position="223"/>
    </location>
</feature>
<feature type="helix" evidence="59">
    <location>
        <begin position="227"/>
        <end position="229"/>
    </location>
</feature>
<feature type="helix" evidence="60">
    <location>
        <begin position="232"/>
        <end position="236"/>
    </location>
</feature>
<feature type="helix" evidence="60">
    <location>
        <begin position="242"/>
        <end position="258"/>
    </location>
</feature>
<feature type="helix" evidence="56">
    <location>
        <begin position="268"/>
        <end position="275"/>
    </location>
</feature>
<feature type="helix" evidence="60">
    <location>
        <begin position="310"/>
        <end position="319"/>
    </location>
</feature>
<feature type="turn" evidence="61">
    <location>
        <begin position="327"/>
        <end position="329"/>
    </location>
</feature>
<feature type="helix" evidence="60">
    <location>
        <begin position="332"/>
        <end position="341"/>
    </location>
</feature>
<feature type="turn" evidence="60">
    <location>
        <begin position="346"/>
        <end position="348"/>
    </location>
</feature>
<feature type="helix" evidence="60">
    <location>
        <begin position="352"/>
        <end position="356"/>
    </location>
</feature>
<feature type="helix" evidence="60">
    <location>
        <begin position="359"/>
        <end position="366"/>
    </location>
</feature>
<feature type="helix" evidence="60">
    <location>
        <begin position="371"/>
        <end position="379"/>
    </location>
</feature>
<protein>
    <recommendedName>
        <fullName evidence="36">Dual specificity mitogen-activated protein kinase kinase 1</fullName>
        <shortName>MAP kinase kinase 1</shortName>
        <shortName>MAPKK 1</shortName>
        <shortName>MKK1</shortName>
        <ecNumber>2.7.12.2</ecNumber>
    </recommendedName>
    <alternativeName>
        <fullName>ERK activator kinase 1</fullName>
    </alternativeName>
    <alternativeName>
        <fullName>MAPK/ERK kinase 1</fullName>
        <shortName>MEK 1</shortName>
    </alternativeName>
</protein>
<sequence length="393" mass="43439">MPKKKPTPIQLNPAPDGSAVNGTSSAETNLEALQKKLEELELDEQQRKRLEAFLTQKQKVGELKDDDFEKISELGAGNGGVVFKVSHKPSGLVMARKLIHLEIKPAIRNQIIRELQVLHECNSPYIVGFYGAFYSDGEISICMEHMDGGSLDQVLKKAGRIPEQILGKVSIAVIKGLTYLREKHKIMHRDVKPSNILVNSRGEIKLCDFGVSGQLIDSMANSFVGTRSYMSPERLQGTHYSVQSDIWSMGLSLVEMAVGRYPIPPPDAKELELMFGCQVEGDAAETPPRPRTPGRPLSSYGMDSRPPMAIFELLDYIVNEPPPKLPSGVFSLEFQDFVNKCLIKNPAERADLKQLMVHAFIKRSDAEEVDFAGWLCSTIGLNQPSTPTHAAGV</sequence>
<organism>
    <name type="scientific">Homo sapiens</name>
    <name type="common">Human</name>
    <dbReference type="NCBI Taxonomy" id="9606"/>
    <lineage>
        <taxon>Eukaryota</taxon>
        <taxon>Metazoa</taxon>
        <taxon>Chordata</taxon>
        <taxon>Craniata</taxon>
        <taxon>Vertebrata</taxon>
        <taxon>Euteleostomi</taxon>
        <taxon>Mammalia</taxon>
        <taxon>Eutheria</taxon>
        <taxon>Euarchontoglires</taxon>
        <taxon>Primates</taxon>
        <taxon>Haplorrhini</taxon>
        <taxon>Catarrhini</taxon>
        <taxon>Hominidae</taxon>
        <taxon>Homo</taxon>
    </lineage>
</organism>
<dbReference type="EC" id="2.7.12.2"/>
<dbReference type="EMBL" id="L05624">
    <property type="protein sequence ID" value="AAA36318.1"/>
    <property type="molecule type" value="mRNA"/>
</dbReference>
<dbReference type="EMBL" id="L11284">
    <property type="status" value="NOT_ANNOTATED_CDS"/>
    <property type="molecule type" value="mRNA"/>
</dbReference>
<dbReference type="CCDS" id="CCDS10216.1">
    <molecule id="Q02750-1"/>
</dbReference>
<dbReference type="PIR" id="A45100">
    <property type="entry name" value="A45100"/>
</dbReference>
<dbReference type="RefSeq" id="NP_002746.1">
    <molecule id="Q02750-1"/>
    <property type="nucleotide sequence ID" value="NM_002755.4"/>
</dbReference>
<dbReference type="RefSeq" id="XP_016877900.1">
    <molecule id="Q02750-2"/>
    <property type="nucleotide sequence ID" value="XM_017022411.3"/>
</dbReference>
<dbReference type="RefSeq" id="XP_054234419.1">
    <molecule id="Q02750-2"/>
    <property type="nucleotide sequence ID" value="XM_054378444.1"/>
</dbReference>
<dbReference type="PDB" id="1S9J">
    <property type="method" value="X-ray"/>
    <property type="resolution" value="2.40 A"/>
    <property type="chains" value="A=62-393"/>
</dbReference>
<dbReference type="PDB" id="2P55">
    <property type="method" value="X-ray"/>
    <property type="resolution" value="2.80 A"/>
    <property type="chains" value="A=62-393"/>
</dbReference>
<dbReference type="PDB" id="3DV3">
    <property type="method" value="X-ray"/>
    <property type="resolution" value="2.30 A"/>
    <property type="chains" value="A=62-382"/>
</dbReference>
<dbReference type="PDB" id="3DY7">
    <property type="method" value="X-ray"/>
    <property type="resolution" value="2.70 A"/>
    <property type="chains" value="A=62-393"/>
</dbReference>
<dbReference type="PDB" id="3E8N">
    <property type="method" value="X-ray"/>
    <property type="resolution" value="2.50 A"/>
    <property type="chains" value="A=62-393"/>
</dbReference>
<dbReference type="PDB" id="3EQB">
    <property type="method" value="X-ray"/>
    <property type="resolution" value="2.62 A"/>
    <property type="chains" value="A=62-393"/>
</dbReference>
<dbReference type="PDB" id="3EQC">
    <property type="method" value="X-ray"/>
    <property type="resolution" value="1.80 A"/>
    <property type="chains" value="A=35-393"/>
</dbReference>
<dbReference type="PDB" id="3EQD">
    <property type="method" value="X-ray"/>
    <property type="resolution" value="2.10 A"/>
    <property type="chains" value="A=35-393"/>
</dbReference>
<dbReference type="PDB" id="3EQF">
    <property type="method" value="X-ray"/>
    <property type="resolution" value="2.70 A"/>
    <property type="chains" value="A=35-393"/>
</dbReference>
<dbReference type="PDB" id="3EQG">
    <property type="method" value="X-ray"/>
    <property type="resolution" value="2.50 A"/>
    <property type="chains" value="A=35-393"/>
</dbReference>
<dbReference type="PDB" id="3EQH">
    <property type="method" value="X-ray"/>
    <property type="resolution" value="2.00 A"/>
    <property type="chains" value="A=35-393"/>
</dbReference>
<dbReference type="PDB" id="3EQI">
    <property type="method" value="X-ray"/>
    <property type="resolution" value="1.90 A"/>
    <property type="chains" value="A=35-393"/>
</dbReference>
<dbReference type="PDB" id="3MBL">
    <property type="method" value="X-ray"/>
    <property type="resolution" value="2.60 A"/>
    <property type="chains" value="A=62-382"/>
</dbReference>
<dbReference type="PDB" id="3ORN">
    <property type="method" value="X-ray"/>
    <property type="resolution" value="2.80 A"/>
    <property type="chains" value="A=62-393"/>
</dbReference>
<dbReference type="PDB" id="3OS3">
    <property type="method" value="X-ray"/>
    <property type="resolution" value="2.80 A"/>
    <property type="chains" value="A=62-393"/>
</dbReference>
<dbReference type="PDB" id="3PP1">
    <property type="method" value="X-ray"/>
    <property type="resolution" value="2.70 A"/>
    <property type="chains" value="A=62-382"/>
</dbReference>
<dbReference type="PDB" id="3SLS">
    <property type="method" value="X-ray"/>
    <property type="resolution" value="2.30 A"/>
    <property type="chains" value="A/B=45-263, A/B=308-383"/>
</dbReference>
<dbReference type="PDB" id="3V01">
    <property type="method" value="X-ray"/>
    <property type="resolution" value="2.70 A"/>
    <property type="chains" value="A=62-393"/>
</dbReference>
<dbReference type="PDB" id="3V04">
    <property type="method" value="X-ray"/>
    <property type="resolution" value="2.70 A"/>
    <property type="chains" value="A=62-393"/>
</dbReference>
<dbReference type="PDB" id="3VVH">
    <property type="method" value="X-ray"/>
    <property type="resolution" value="2.00 A"/>
    <property type="chains" value="A/B/C=62-393"/>
</dbReference>
<dbReference type="PDB" id="3W8Q">
    <property type="method" value="X-ray"/>
    <property type="resolution" value="2.20 A"/>
    <property type="chains" value="A=39-382"/>
</dbReference>
<dbReference type="PDB" id="3WIG">
    <property type="method" value="X-ray"/>
    <property type="resolution" value="2.70 A"/>
    <property type="chains" value="A=62-393"/>
</dbReference>
<dbReference type="PDB" id="3ZLS">
    <property type="method" value="X-ray"/>
    <property type="resolution" value="2.50 A"/>
    <property type="chains" value="A=37-383"/>
</dbReference>
<dbReference type="PDB" id="3ZLW">
    <property type="method" value="X-ray"/>
    <property type="resolution" value="2.12 A"/>
    <property type="chains" value="A=37-383"/>
</dbReference>
<dbReference type="PDB" id="3ZLX">
    <property type="method" value="X-ray"/>
    <property type="resolution" value="2.20 A"/>
    <property type="chains" value="A=37-383"/>
</dbReference>
<dbReference type="PDB" id="3ZLY">
    <property type="method" value="X-ray"/>
    <property type="resolution" value="2.11 A"/>
    <property type="chains" value="A=37-383"/>
</dbReference>
<dbReference type="PDB" id="3ZM4">
    <property type="method" value="X-ray"/>
    <property type="resolution" value="2.37 A"/>
    <property type="chains" value="A=37-383"/>
</dbReference>
<dbReference type="PDB" id="4AN2">
    <property type="method" value="X-ray"/>
    <property type="resolution" value="2.50 A"/>
    <property type="chains" value="A=61-392"/>
</dbReference>
<dbReference type="PDB" id="4AN3">
    <property type="method" value="X-ray"/>
    <property type="resolution" value="2.10 A"/>
    <property type="chains" value="A=61-392"/>
</dbReference>
<dbReference type="PDB" id="4AN9">
    <property type="method" value="X-ray"/>
    <property type="resolution" value="2.80 A"/>
    <property type="chains" value="A=61-392"/>
</dbReference>
<dbReference type="PDB" id="4ANB">
    <property type="method" value="X-ray"/>
    <property type="resolution" value="2.20 A"/>
    <property type="chains" value="A=61-392"/>
</dbReference>
<dbReference type="PDB" id="4ARK">
    <property type="method" value="X-ray"/>
    <property type="resolution" value="2.60 A"/>
    <property type="chains" value="A=62-393"/>
</dbReference>
<dbReference type="PDB" id="4LMN">
    <property type="method" value="X-ray"/>
    <property type="resolution" value="2.80 A"/>
    <property type="chains" value="A=62-393"/>
</dbReference>
<dbReference type="PDB" id="4MNE">
    <property type="method" value="X-ray"/>
    <property type="resolution" value="2.85 A"/>
    <property type="chains" value="A/D/E/H=62-393"/>
</dbReference>
<dbReference type="PDB" id="4U7Z">
    <property type="method" value="X-ray"/>
    <property type="resolution" value="2.80 A"/>
    <property type="chains" value="A=62-393"/>
</dbReference>
<dbReference type="PDB" id="4U80">
    <property type="method" value="X-ray"/>
    <property type="resolution" value="2.80 A"/>
    <property type="chains" value="A=62-393"/>
</dbReference>
<dbReference type="PDB" id="4U81">
    <property type="method" value="X-ray"/>
    <property type="resolution" value="2.70 A"/>
    <property type="chains" value="A=62-393"/>
</dbReference>
<dbReference type="PDB" id="5BX0">
    <property type="method" value="X-ray"/>
    <property type="resolution" value="2.93 A"/>
    <property type="chains" value="A=37-383"/>
</dbReference>
<dbReference type="PDB" id="5EYM">
    <property type="method" value="X-ray"/>
    <property type="resolution" value="2.70 A"/>
    <property type="chains" value="A/B=35-393"/>
</dbReference>
<dbReference type="PDB" id="5HZE">
    <property type="method" value="X-ray"/>
    <property type="resolution" value="2.40 A"/>
    <property type="chains" value="A=37-383"/>
</dbReference>
<dbReference type="PDB" id="5YT3">
    <property type="method" value="X-ray"/>
    <property type="resolution" value="2.90 A"/>
    <property type="chains" value="A/B/C/D=39-382"/>
</dbReference>
<dbReference type="PDB" id="6NYB">
    <property type="method" value="EM"/>
    <property type="resolution" value="4.10 A"/>
    <property type="chains" value="B=1-393"/>
</dbReference>
<dbReference type="PDB" id="6PP9">
    <property type="method" value="X-ray"/>
    <property type="resolution" value="2.59 A"/>
    <property type="chains" value="B=1-393"/>
</dbReference>
<dbReference type="PDB" id="6Q0J">
    <property type="method" value="EM"/>
    <property type="resolution" value="4.90 A"/>
    <property type="chains" value="C/D=1-393"/>
</dbReference>
<dbReference type="PDB" id="6Q0T">
    <property type="method" value="EM"/>
    <property type="resolution" value="5.70 A"/>
    <property type="chains" value="C=1-392"/>
</dbReference>
<dbReference type="PDB" id="6U2G">
    <property type="method" value="X-ray"/>
    <property type="resolution" value="2.89 A"/>
    <property type="chains" value="A=2-393"/>
</dbReference>
<dbReference type="PDB" id="6V2W">
    <property type="method" value="X-ray"/>
    <property type="resolution" value="3.12 A"/>
    <property type="chains" value="B=1-393"/>
</dbReference>
<dbReference type="PDB" id="6X2P">
    <property type="method" value="X-ray"/>
    <property type="resolution" value="2.40 A"/>
    <property type="chains" value="D=28-44"/>
</dbReference>
<dbReference type="PDB" id="6X2S">
    <property type="method" value="X-ray"/>
    <property type="resolution" value="2.50 A"/>
    <property type="chains" value="D=29-44"/>
</dbReference>
<dbReference type="PDB" id="6X2X">
    <property type="method" value="X-ray"/>
    <property type="resolution" value="2.46 A"/>
    <property type="chains" value="D=29-44"/>
</dbReference>
<dbReference type="PDB" id="7B3M">
    <property type="method" value="X-ray"/>
    <property type="resolution" value="2.30 A"/>
    <property type="chains" value="A/B=37-263, A/B=308-383"/>
</dbReference>
<dbReference type="PDB" id="7B7R">
    <property type="method" value="X-ray"/>
    <property type="resolution" value="1.70 A"/>
    <property type="chains" value="A/B=37-263, A/B=308-383"/>
</dbReference>
<dbReference type="PDB" id="7B94">
    <property type="method" value="X-ray"/>
    <property type="resolution" value="2.00 A"/>
    <property type="chains" value="A/B=37-263, A/B=308-383"/>
</dbReference>
<dbReference type="PDB" id="7B9L">
    <property type="method" value="X-ray"/>
    <property type="resolution" value="1.70 A"/>
    <property type="chains" value="A/B=37-263, A/B=308-383"/>
</dbReference>
<dbReference type="PDB" id="7F2X">
    <property type="method" value="X-ray"/>
    <property type="resolution" value="2.01 A"/>
    <property type="chains" value="A=45-392"/>
</dbReference>
<dbReference type="PDB" id="7M0T">
    <property type="method" value="X-ray"/>
    <property type="resolution" value="3.19 A"/>
    <property type="chains" value="B=1-393"/>
</dbReference>
<dbReference type="PDB" id="7M0U">
    <property type="method" value="X-ray"/>
    <property type="resolution" value="3.09 A"/>
    <property type="chains" value="B=1-393"/>
</dbReference>
<dbReference type="PDB" id="7M0V">
    <property type="method" value="X-ray"/>
    <property type="resolution" value="3.16 A"/>
    <property type="chains" value="B=1-393"/>
</dbReference>
<dbReference type="PDB" id="7M0W">
    <property type="method" value="X-ray"/>
    <property type="resolution" value="3.09 A"/>
    <property type="chains" value="B=1-393"/>
</dbReference>
<dbReference type="PDB" id="7M0X">
    <property type="method" value="X-ray"/>
    <property type="resolution" value="2.47 A"/>
    <property type="chains" value="B=1-393"/>
</dbReference>
<dbReference type="PDB" id="7M0Y">
    <property type="method" value="X-ray"/>
    <property type="resolution" value="3.45 A"/>
    <property type="chains" value="B=1-393"/>
</dbReference>
<dbReference type="PDB" id="7M0Z">
    <property type="method" value="X-ray"/>
    <property type="resolution" value="3.12 A"/>
    <property type="chains" value="B=1-393"/>
</dbReference>
<dbReference type="PDB" id="7MFD">
    <property type="method" value="EM"/>
    <property type="resolution" value="3.66 A"/>
    <property type="chains" value="B=1-393"/>
</dbReference>
<dbReference type="PDB" id="7PQV">
    <property type="method" value="X-ray"/>
    <property type="resolution" value="2.13 A"/>
    <property type="chains" value="A=39-382"/>
</dbReference>
<dbReference type="PDB" id="7UMB">
    <property type="method" value="X-ray"/>
    <property type="resolution" value="3.23 A"/>
    <property type="chains" value="C=35-393"/>
</dbReference>
<dbReference type="PDB" id="7XLP">
    <property type="method" value="X-ray"/>
    <property type="resolution" value="2.10 A"/>
    <property type="chains" value="A=37-383"/>
</dbReference>
<dbReference type="PDB" id="7XNC">
    <property type="method" value="X-ray"/>
    <property type="resolution" value="2.10 A"/>
    <property type="chains" value="A=37-383"/>
</dbReference>
<dbReference type="PDB" id="8CHF">
    <property type="method" value="EM"/>
    <property type="resolution" value="4.25 A"/>
    <property type="chains" value="E/F=1-393"/>
</dbReference>
<dbReference type="PDB" id="8DGS">
    <property type="method" value="EM"/>
    <property type="resolution" value="4.30 A"/>
    <property type="chains" value="B=1-392"/>
</dbReference>
<dbReference type="PDB" id="8DGT">
    <property type="method" value="EM"/>
    <property type="resolution" value="3.90 A"/>
    <property type="chains" value="B=1-392"/>
</dbReference>
<dbReference type="PDB" id="8YP4">
    <property type="method" value="X-ray"/>
    <property type="resolution" value="2.35 A"/>
    <property type="chains" value="A/B=33-386"/>
</dbReference>
<dbReference type="PDB" id="9AXA">
    <property type="method" value="EM"/>
    <property type="resolution" value="4.36 A"/>
    <property type="chains" value="B/D=1-393"/>
</dbReference>
<dbReference type="PDB" id="9AXC">
    <property type="method" value="EM"/>
    <property type="resolution" value="4.16 A"/>
    <property type="chains" value="B/D=1-393"/>
</dbReference>
<dbReference type="PDB" id="9AXH">
    <property type="method" value="X-ray"/>
    <property type="resolution" value="2.81 A"/>
    <property type="chains" value="A/B=37-263, A/B=308-383"/>
</dbReference>
<dbReference type="PDB" id="9AXM">
    <property type="method" value="X-ray"/>
    <property type="resolution" value="2.42 A"/>
    <property type="chains" value="A/C=37-263, A/C=308-383"/>
</dbReference>
<dbReference type="PDB" id="9AXX">
    <property type="method" value="X-ray"/>
    <property type="resolution" value="2.07 A"/>
    <property type="chains" value="A/C=37-263, A/C=308-383"/>
</dbReference>
<dbReference type="PDB" id="9AXY">
    <property type="method" value="X-ray"/>
    <property type="resolution" value="3.60 A"/>
    <property type="chains" value="B=1-393"/>
</dbReference>
<dbReference type="PDB" id="9AY7">
    <property type="method" value="X-ray"/>
    <property type="resolution" value="2.41 A"/>
    <property type="chains" value="B=1-393"/>
</dbReference>
<dbReference type="PDB" id="9AYA">
    <property type="method" value="X-ray"/>
    <property type="resolution" value="2.59 A"/>
    <property type="chains" value="B/D=37-263, B/D=308-383"/>
</dbReference>
<dbReference type="PDBsum" id="1S9J"/>
<dbReference type="PDBsum" id="2P55"/>
<dbReference type="PDBsum" id="3DV3"/>
<dbReference type="PDBsum" id="3DY7"/>
<dbReference type="PDBsum" id="3E8N"/>
<dbReference type="PDBsum" id="3EQB"/>
<dbReference type="PDBsum" id="3EQC"/>
<dbReference type="PDBsum" id="3EQD"/>
<dbReference type="PDBsum" id="3EQF"/>
<dbReference type="PDBsum" id="3EQG"/>
<dbReference type="PDBsum" id="3EQH"/>
<dbReference type="PDBsum" id="3EQI"/>
<dbReference type="PDBsum" id="3MBL"/>
<dbReference type="PDBsum" id="3ORN"/>
<dbReference type="PDBsum" id="3OS3"/>
<dbReference type="PDBsum" id="3PP1"/>
<dbReference type="PDBsum" id="3SLS"/>
<dbReference type="PDBsum" id="3V01"/>
<dbReference type="PDBsum" id="3V04"/>
<dbReference type="PDBsum" id="3VVH"/>
<dbReference type="PDBsum" id="3W8Q"/>
<dbReference type="PDBsum" id="3WIG"/>
<dbReference type="PDBsum" id="3ZLS"/>
<dbReference type="PDBsum" id="3ZLW"/>
<dbReference type="PDBsum" id="3ZLX"/>
<dbReference type="PDBsum" id="3ZLY"/>
<dbReference type="PDBsum" id="3ZM4"/>
<dbReference type="PDBsum" id="4AN2"/>
<dbReference type="PDBsum" id="4AN3"/>
<dbReference type="PDBsum" id="4AN9"/>
<dbReference type="PDBsum" id="4ANB"/>
<dbReference type="PDBsum" id="4ARK"/>
<dbReference type="PDBsum" id="4LMN"/>
<dbReference type="PDBsum" id="4MNE"/>
<dbReference type="PDBsum" id="4U7Z"/>
<dbReference type="PDBsum" id="4U80"/>
<dbReference type="PDBsum" id="4U81"/>
<dbReference type="PDBsum" id="5BX0"/>
<dbReference type="PDBsum" id="5EYM"/>
<dbReference type="PDBsum" id="5HZE"/>
<dbReference type="PDBsum" id="5YT3"/>
<dbReference type="PDBsum" id="6NYB"/>
<dbReference type="PDBsum" id="6PP9"/>
<dbReference type="PDBsum" id="6Q0J"/>
<dbReference type="PDBsum" id="6Q0T"/>
<dbReference type="PDBsum" id="6U2G"/>
<dbReference type="PDBsum" id="6V2W"/>
<dbReference type="PDBsum" id="6X2P"/>
<dbReference type="PDBsum" id="6X2S"/>
<dbReference type="PDBsum" id="6X2X"/>
<dbReference type="PDBsum" id="7B3M"/>
<dbReference type="PDBsum" id="7B7R"/>
<dbReference type="PDBsum" id="7B94"/>
<dbReference type="PDBsum" id="7B9L"/>
<dbReference type="PDBsum" id="7F2X"/>
<dbReference type="PDBsum" id="7M0T"/>
<dbReference type="PDBsum" id="7M0U"/>
<dbReference type="PDBsum" id="7M0V"/>
<dbReference type="PDBsum" id="7M0W"/>
<dbReference type="PDBsum" id="7M0X"/>
<dbReference type="PDBsum" id="7M0Y"/>
<dbReference type="PDBsum" id="7M0Z"/>
<dbReference type="PDBsum" id="7MFD"/>
<dbReference type="PDBsum" id="7PQV"/>
<dbReference type="PDBsum" id="7UMB"/>
<dbReference type="PDBsum" id="7XLP"/>
<dbReference type="PDBsum" id="7XNC"/>
<dbReference type="PDBsum" id="8CHF"/>
<dbReference type="PDBsum" id="8DGS"/>
<dbReference type="PDBsum" id="8DGT"/>
<dbReference type="PDBsum" id="8YP4"/>
<dbReference type="PDBsum" id="9AXA"/>
<dbReference type="PDBsum" id="9AXC"/>
<dbReference type="PDBsum" id="9AXH"/>
<dbReference type="PDBsum" id="9AXM"/>
<dbReference type="PDBsum" id="9AXX"/>
<dbReference type="PDBsum" id="9AXY"/>
<dbReference type="PDBsum" id="9AY7"/>
<dbReference type="PDBsum" id="9AYA"/>
<dbReference type="EMDB" id="EMD-0541"/>
<dbReference type="EMDB" id="EMD-16660"/>
<dbReference type="EMDB" id="EMD-20550"/>
<dbReference type="EMDB" id="EMD-20552"/>
<dbReference type="EMDB" id="EMD-23813"/>
<dbReference type="EMDB" id="EMD-27428"/>
<dbReference type="EMDB" id="EMD-27429"/>
<dbReference type="EMDB" id="EMD-43931"/>
<dbReference type="EMDB" id="EMD-43932"/>
<dbReference type="SMR" id="Q02750"/>
<dbReference type="BioGRID" id="111590">
    <property type="interactions" value="295"/>
</dbReference>
<dbReference type="CORUM" id="Q02750"/>
<dbReference type="DIP" id="DIP-201N"/>
<dbReference type="ELM" id="Q02750"/>
<dbReference type="FunCoup" id="Q02750">
    <property type="interactions" value="5080"/>
</dbReference>
<dbReference type="IntAct" id="Q02750">
    <property type="interactions" value="163"/>
</dbReference>
<dbReference type="MINT" id="Q02750"/>
<dbReference type="STRING" id="9606.ENSP00000302486"/>
<dbReference type="BindingDB" id="Q02750"/>
<dbReference type="ChEMBL" id="CHEMBL3587"/>
<dbReference type="DrugBank" id="DB06892">
    <property type="generic name" value="(5S)-4,5-difluoro-6-[(2-fluoro-4-iodophenyl)imino]-N-(2-hydroxyethoxy)cyclohexa-1,3-diene-1-carboxamide"/>
</dbReference>
<dbReference type="DrugBank" id="DB07046">
    <property type="generic name" value="2-[(2-chloro-4-iodophenyl)amino]-N-{[(2R)-2,3-dihydroxypropyl]oxy}-3,4-difluorobenzamide"/>
</dbReference>
<dbReference type="DrugBank" id="DB08208">
    <property type="generic name" value="2-[(4-ETHYNYL-2-FLUOROPHENYL)AMINO]-3,4-DIFLUORO-N-(2-HYDROXYETHOXY)BENZAMIDE"/>
</dbReference>
<dbReference type="DrugBank" id="DB03115">
    <property type="generic name" value="5-Bromo-N-[(2S)-2,3-dihydroxypropoxy]-3,4-difluoro-2-[(2-fluoro-4-iodophenyl)amino]benzamide"/>
</dbReference>
<dbReference type="DrugBank" id="DB11967">
    <property type="generic name" value="Binimetinib"/>
</dbReference>
<dbReference type="DrugBank" id="DB06616">
    <property type="generic name" value="Bosutinib"/>
</dbReference>
<dbReference type="DrugBank" id="DB05239">
    <property type="generic name" value="Cobimetinib"/>
</dbReference>
<dbReference type="DrugBank" id="DB04367">
    <property type="generic name" value="Debromohymenialdisine"/>
</dbReference>
<dbReference type="DrugBank" id="DB02152">
    <property type="generic name" value="K-252a"/>
</dbReference>
<dbReference type="DrugBank" id="DB07101">
    <property type="generic name" value="Mirdametinib"/>
</dbReference>
<dbReference type="DrugBank" id="DB08130">
    <property type="generic name" value="N-(5-{3,4-difluoro-2-[(2-fluoro-4-iodophenyl)amino]phenyl}-1,3,4-oxadiazol-2-yl)ethane-1,2-diamine"/>
</dbReference>
<dbReference type="DrugBank" id="DB17042">
    <property type="generic name" value="PD-98059"/>
</dbReference>
<dbReference type="DrugBank" id="DB14904">
    <property type="generic name" value="Pimasertib"/>
</dbReference>
<dbReference type="DrugBank" id="DB07340">
    <property type="generic name" value="Reversine"/>
</dbReference>
<dbReference type="DrugBank" id="DB11689">
    <property type="generic name" value="Selumetinib"/>
</dbReference>
<dbReference type="DrugBank" id="DB04462">
    <property type="generic name" value="Tetrabromo-2-Benzotriazole"/>
</dbReference>
<dbReference type="DrugBank" id="DB08911">
    <property type="generic name" value="Trametinib"/>
</dbReference>
<dbReference type="DrugCentral" id="Q02750"/>
<dbReference type="GuidetoPHARMACOLOGY" id="2062"/>
<dbReference type="CarbonylDB" id="Q02750"/>
<dbReference type="GlyGen" id="Q02750">
    <property type="glycosylation" value="2 sites, 1 N-linked glycan (1 site), 1 O-linked glycan (1 site)"/>
</dbReference>
<dbReference type="iPTMnet" id="Q02750"/>
<dbReference type="PhosphoSitePlus" id="Q02750"/>
<dbReference type="SwissPalm" id="Q02750"/>
<dbReference type="BioMuta" id="MAP2K1"/>
<dbReference type="DMDM" id="400274"/>
<dbReference type="CPTAC" id="CPTAC-1544"/>
<dbReference type="CPTAC" id="CPTAC-1545"/>
<dbReference type="CPTAC" id="CPTAC-2939"/>
<dbReference type="CPTAC" id="CPTAC-2940"/>
<dbReference type="CPTAC" id="CPTAC-5745"/>
<dbReference type="CPTAC" id="CPTAC-808"/>
<dbReference type="CPTAC" id="CPTAC-809"/>
<dbReference type="CPTAC" id="non-CPTAC-5410"/>
<dbReference type="CPTAC" id="non-CPTAC-5411"/>
<dbReference type="CPTAC" id="non-CPTAC-5557"/>
<dbReference type="CPTAC" id="non-CPTAC-5704"/>
<dbReference type="jPOST" id="Q02750"/>
<dbReference type="MassIVE" id="Q02750"/>
<dbReference type="PaxDb" id="9606-ENSP00000302486"/>
<dbReference type="PeptideAtlas" id="Q02750"/>
<dbReference type="ProteomicsDB" id="58119">
    <molecule id="Q02750-1"/>
</dbReference>
<dbReference type="ProteomicsDB" id="58120">
    <molecule id="Q02750-2"/>
</dbReference>
<dbReference type="Pumba" id="Q02750"/>
<dbReference type="Antibodypedia" id="3542">
    <property type="antibodies" value="3498 antibodies from 51 providers"/>
</dbReference>
<dbReference type="CPTC" id="Q02750">
    <property type="antibodies" value="2 antibodies"/>
</dbReference>
<dbReference type="DNASU" id="5604"/>
<dbReference type="Ensembl" id="ENST00000307102.10">
    <molecule id="Q02750-1"/>
    <property type="protein sequence ID" value="ENSP00000302486.5"/>
    <property type="gene ID" value="ENSG00000169032.11"/>
</dbReference>
<dbReference type="GeneID" id="5604"/>
<dbReference type="KEGG" id="hsa:5604"/>
<dbReference type="MANE-Select" id="ENST00000307102.10">
    <property type="protein sequence ID" value="ENSP00000302486.5"/>
    <property type="RefSeq nucleotide sequence ID" value="NM_002755.4"/>
    <property type="RefSeq protein sequence ID" value="NP_002746.1"/>
</dbReference>
<dbReference type="UCSC" id="uc010bhq.4">
    <molecule id="Q02750-1"/>
    <property type="organism name" value="human"/>
</dbReference>
<dbReference type="AGR" id="HGNC:6840"/>
<dbReference type="CTD" id="5604"/>
<dbReference type="DisGeNET" id="5604"/>
<dbReference type="GeneCards" id="MAP2K1"/>
<dbReference type="GeneReviews" id="MAP2K1"/>
<dbReference type="HGNC" id="HGNC:6840">
    <property type="gene designation" value="MAP2K1"/>
</dbReference>
<dbReference type="HPA" id="ENSG00000169032">
    <property type="expression patterns" value="Low tissue specificity"/>
</dbReference>
<dbReference type="MalaCards" id="MAP2K1"/>
<dbReference type="MIM" id="155950">
    <property type="type" value="phenotype"/>
</dbReference>
<dbReference type="MIM" id="176872">
    <property type="type" value="gene"/>
</dbReference>
<dbReference type="MIM" id="615279">
    <property type="type" value="phenotype"/>
</dbReference>
<dbReference type="neXtProt" id="NX_Q02750"/>
<dbReference type="OpenTargets" id="ENSG00000169032"/>
<dbReference type="Orphanet" id="1340">
    <property type="disease" value="Cardiofaciocutaneous syndrome"/>
</dbReference>
<dbReference type="Orphanet" id="389">
    <property type="disease" value="Langerhans cell histiocytosis"/>
</dbReference>
<dbReference type="PharmGKB" id="PA30584"/>
<dbReference type="VEuPathDB" id="HostDB:ENSG00000169032"/>
<dbReference type="eggNOG" id="KOG0581">
    <property type="taxonomic scope" value="Eukaryota"/>
</dbReference>
<dbReference type="GeneTree" id="ENSGT00940000153487"/>
<dbReference type="InParanoid" id="Q02750"/>
<dbReference type="OMA" id="VGTMYFM"/>
<dbReference type="OrthoDB" id="10252354at2759"/>
<dbReference type="PAN-GO" id="Q02750">
    <property type="GO annotations" value="3 GO annotations based on evolutionary models"/>
</dbReference>
<dbReference type="PhylomeDB" id="Q02750"/>
<dbReference type="TreeFam" id="TF105137"/>
<dbReference type="BRENDA" id="2.7.12.2">
    <property type="organism ID" value="2681"/>
</dbReference>
<dbReference type="PathwayCommons" id="Q02750"/>
<dbReference type="Reactome" id="R-HSA-110056">
    <property type="pathway name" value="MAPK3 (ERK1) activation"/>
</dbReference>
<dbReference type="Reactome" id="R-HSA-170968">
    <property type="pathway name" value="Frs2-mediated activation"/>
</dbReference>
<dbReference type="Reactome" id="R-HSA-445144">
    <property type="pathway name" value="Signal transduction by L1"/>
</dbReference>
<dbReference type="Reactome" id="R-HSA-5210891">
    <property type="pathway name" value="Uptake and function of anthrax toxins"/>
</dbReference>
<dbReference type="Reactome" id="R-HSA-5673000">
    <property type="pathway name" value="RAF activation"/>
</dbReference>
<dbReference type="Reactome" id="R-HSA-5674135">
    <property type="pathway name" value="MAP2K and MAPK activation"/>
</dbReference>
<dbReference type="Reactome" id="R-HSA-5674499">
    <property type="pathway name" value="Negative feedback regulation of MAPK pathway"/>
</dbReference>
<dbReference type="Reactome" id="R-HSA-5684264">
    <property type="pathway name" value="MAP3K8 (TPL2)-dependent MAPK1/3 activation"/>
</dbReference>
<dbReference type="Reactome" id="R-HSA-6802946">
    <property type="pathway name" value="Signaling by moderate kinase activity BRAF mutants"/>
</dbReference>
<dbReference type="Reactome" id="R-HSA-6802948">
    <property type="pathway name" value="Signaling by high-kinase activity BRAF mutants"/>
</dbReference>
<dbReference type="Reactome" id="R-HSA-6802952">
    <property type="pathway name" value="Signaling by BRAF and RAF1 fusions"/>
</dbReference>
<dbReference type="Reactome" id="R-HSA-6802955">
    <property type="pathway name" value="Paradoxical activation of RAF signaling by kinase inactive BRAF"/>
</dbReference>
<dbReference type="Reactome" id="R-HSA-9649948">
    <property type="pathway name" value="Signaling downstream of RAS mutants"/>
</dbReference>
<dbReference type="Reactome" id="R-HSA-9652169">
    <property type="pathway name" value="Signaling by MAP2K mutants"/>
</dbReference>
<dbReference type="Reactome" id="R-HSA-9656223">
    <property type="pathway name" value="Signaling by RAF1 mutants"/>
</dbReference>
<dbReference type="SignaLink" id="Q02750"/>
<dbReference type="SIGNOR" id="Q02750"/>
<dbReference type="BioGRID-ORCS" id="5604">
    <property type="hits" value="39 hits in 1212 CRISPR screens"/>
</dbReference>
<dbReference type="CD-CODE" id="8C2F96ED">
    <property type="entry name" value="Centrosome"/>
</dbReference>
<dbReference type="CD-CODE" id="91857CE7">
    <property type="entry name" value="Nucleolus"/>
</dbReference>
<dbReference type="CD-CODE" id="FB4E32DD">
    <property type="entry name" value="Presynaptic clusters and postsynaptic densities"/>
</dbReference>
<dbReference type="ChiTaRS" id="MAP2K1">
    <property type="organism name" value="human"/>
</dbReference>
<dbReference type="EvolutionaryTrace" id="Q02750"/>
<dbReference type="GeneWiki" id="MAP2K1"/>
<dbReference type="GenomeRNAi" id="5604"/>
<dbReference type="Pharos" id="Q02750">
    <property type="development level" value="Tclin"/>
</dbReference>
<dbReference type="PRO" id="PR:Q02750"/>
<dbReference type="Proteomes" id="UP000005640">
    <property type="component" value="Chromosome 15"/>
</dbReference>
<dbReference type="RNAct" id="Q02750">
    <property type="molecule type" value="protein"/>
</dbReference>
<dbReference type="Bgee" id="ENSG00000169032">
    <property type="expression patterns" value="Expressed in secondary oocyte and 207 other cell types or tissues"/>
</dbReference>
<dbReference type="ExpressionAtlas" id="Q02750">
    <property type="expression patterns" value="baseline and differential"/>
</dbReference>
<dbReference type="GO" id="GO:0030424">
    <property type="term" value="C:axon"/>
    <property type="evidence" value="ECO:0007669"/>
    <property type="project" value="Ensembl"/>
</dbReference>
<dbReference type="GO" id="GO:0005938">
    <property type="term" value="C:cell cortex"/>
    <property type="evidence" value="ECO:0007669"/>
    <property type="project" value="Ensembl"/>
</dbReference>
<dbReference type="GO" id="GO:0005813">
    <property type="term" value="C:centrosome"/>
    <property type="evidence" value="ECO:0007669"/>
    <property type="project" value="UniProtKB-SubCell"/>
</dbReference>
<dbReference type="GO" id="GO:0036064">
    <property type="term" value="C:ciliary basal body"/>
    <property type="evidence" value="ECO:0000314"/>
    <property type="project" value="HPA"/>
</dbReference>
<dbReference type="GO" id="GO:0005829">
    <property type="term" value="C:cytosol"/>
    <property type="evidence" value="ECO:0000314"/>
    <property type="project" value="HPA"/>
</dbReference>
<dbReference type="GO" id="GO:0032839">
    <property type="term" value="C:dendrite cytoplasm"/>
    <property type="evidence" value="ECO:0007669"/>
    <property type="project" value="Ensembl"/>
</dbReference>
<dbReference type="GO" id="GO:0005769">
    <property type="term" value="C:early endosome"/>
    <property type="evidence" value="ECO:0000304"/>
    <property type="project" value="UniProtKB"/>
</dbReference>
<dbReference type="GO" id="GO:0005783">
    <property type="term" value="C:endoplasmic reticulum"/>
    <property type="evidence" value="ECO:0000314"/>
    <property type="project" value="MGI"/>
</dbReference>
<dbReference type="GO" id="GO:0005925">
    <property type="term" value="C:focal adhesion"/>
    <property type="evidence" value="ECO:0000304"/>
    <property type="project" value="UniProtKB"/>
</dbReference>
<dbReference type="GO" id="GO:0098978">
    <property type="term" value="C:glutamatergic synapse"/>
    <property type="evidence" value="ECO:0007669"/>
    <property type="project" value="Ensembl"/>
</dbReference>
<dbReference type="GO" id="GO:0005794">
    <property type="term" value="C:Golgi apparatus"/>
    <property type="evidence" value="ECO:0000304"/>
    <property type="project" value="UniProtKB"/>
</dbReference>
<dbReference type="GO" id="GO:0043231">
    <property type="term" value="C:intracellular membrane-bounded organelle"/>
    <property type="evidence" value="ECO:0000314"/>
    <property type="project" value="HPA"/>
</dbReference>
<dbReference type="GO" id="GO:0005770">
    <property type="term" value="C:late endosome"/>
    <property type="evidence" value="ECO:0000304"/>
    <property type="project" value="UniProtKB"/>
</dbReference>
<dbReference type="GO" id="GO:0005874">
    <property type="term" value="C:microtubule"/>
    <property type="evidence" value="ECO:0007669"/>
    <property type="project" value="Ensembl"/>
</dbReference>
<dbReference type="GO" id="GO:0005739">
    <property type="term" value="C:mitochondrion"/>
    <property type="evidence" value="ECO:0000304"/>
    <property type="project" value="UniProtKB"/>
</dbReference>
<dbReference type="GO" id="GO:0005634">
    <property type="term" value="C:nucleus"/>
    <property type="evidence" value="ECO:0000304"/>
    <property type="project" value="UniProtKB"/>
</dbReference>
<dbReference type="GO" id="GO:0043204">
    <property type="term" value="C:perikaryon"/>
    <property type="evidence" value="ECO:0007669"/>
    <property type="project" value="Ensembl"/>
</dbReference>
<dbReference type="GO" id="GO:0048471">
    <property type="term" value="C:perinuclear region of cytoplasm"/>
    <property type="evidence" value="ECO:0007669"/>
    <property type="project" value="Ensembl"/>
</dbReference>
<dbReference type="GO" id="GO:0005886">
    <property type="term" value="C:plasma membrane"/>
    <property type="evidence" value="ECO:0000314"/>
    <property type="project" value="HPA"/>
</dbReference>
<dbReference type="GO" id="GO:0014069">
    <property type="term" value="C:postsynaptic density"/>
    <property type="evidence" value="ECO:0007669"/>
    <property type="project" value="Ensembl"/>
</dbReference>
<dbReference type="GO" id="GO:0005524">
    <property type="term" value="F:ATP binding"/>
    <property type="evidence" value="ECO:0007669"/>
    <property type="project" value="UniProtKB-KW"/>
</dbReference>
<dbReference type="GO" id="GO:0004708">
    <property type="term" value="F:MAP kinase kinase activity"/>
    <property type="evidence" value="ECO:0000314"/>
    <property type="project" value="UniProtKB"/>
</dbReference>
<dbReference type="GO" id="GO:0005078">
    <property type="term" value="F:MAP-kinase scaffold activity"/>
    <property type="evidence" value="ECO:0000315"/>
    <property type="project" value="UniProtKB"/>
</dbReference>
<dbReference type="GO" id="GO:0031435">
    <property type="term" value="F:mitogen-activated protein kinase kinase kinase binding"/>
    <property type="evidence" value="ECO:0007669"/>
    <property type="project" value="Ensembl"/>
</dbReference>
<dbReference type="GO" id="GO:0030295">
    <property type="term" value="F:protein kinase activator activity"/>
    <property type="evidence" value="ECO:0000314"/>
    <property type="project" value="GO_Central"/>
</dbReference>
<dbReference type="GO" id="GO:0004672">
    <property type="term" value="F:protein kinase activity"/>
    <property type="evidence" value="ECO:0000304"/>
    <property type="project" value="ProtInc"/>
</dbReference>
<dbReference type="GO" id="GO:0106310">
    <property type="term" value="F:protein serine kinase activity"/>
    <property type="evidence" value="ECO:0007669"/>
    <property type="project" value="RHEA"/>
</dbReference>
<dbReference type="GO" id="GO:0043539">
    <property type="term" value="F:protein serine/threonine kinase activator activity"/>
    <property type="evidence" value="ECO:0000314"/>
    <property type="project" value="UniProtKB"/>
</dbReference>
<dbReference type="GO" id="GO:0004674">
    <property type="term" value="F:protein serine/threonine kinase activity"/>
    <property type="evidence" value="ECO:0000304"/>
    <property type="project" value="Reactome"/>
</dbReference>
<dbReference type="GO" id="GO:0004712">
    <property type="term" value="F:protein serine/threonine/tyrosine kinase activity"/>
    <property type="evidence" value="ECO:0000304"/>
    <property type="project" value="UniProtKB"/>
</dbReference>
<dbReference type="GO" id="GO:0004713">
    <property type="term" value="F:protein tyrosine kinase activity"/>
    <property type="evidence" value="ECO:0007669"/>
    <property type="project" value="UniProtKB-KW"/>
</dbReference>
<dbReference type="GO" id="GO:0044877">
    <property type="term" value="F:protein-containing complex binding"/>
    <property type="evidence" value="ECO:0007669"/>
    <property type="project" value="Ensembl"/>
</dbReference>
<dbReference type="GO" id="GO:0097110">
    <property type="term" value="F:scaffold protein binding"/>
    <property type="evidence" value="ECO:0000353"/>
    <property type="project" value="UniProtKB"/>
</dbReference>
<dbReference type="GO" id="GO:0031267">
    <property type="term" value="F:small GTPase binding"/>
    <property type="evidence" value="ECO:0007669"/>
    <property type="project" value="Ensembl"/>
</dbReference>
<dbReference type="GO" id="GO:0060020">
    <property type="term" value="P:Bergmann glial cell differentiation"/>
    <property type="evidence" value="ECO:0007669"/>
    <property type="project" value="Ensembl"/>
</dbReference>
<dbReference type="GO" id="GO:0048870">
    <property type="term" value="P:cell motility"/>
    <property type="evidence" value="ECO:0007669"/>
    <property type="project" value="Ensembl"/>
</dbReference>
<dbReference type="GO" id="GO:0090398">
    <property type="term" value="P:cellular senescence"/>
    <property type="evidence" value="ECO:0000315"/>
    <property type="project" value="BHF-UCL"/>
</dbReference>
<dbReference type="GO" id="GO:0021953">
    <property type="term" value="P:central nervous system neuron differentiation"/>
    <property type="evidence" value="ECO:0007669"/>
    <property type="project" value="Ensembl"/>
</dbReference>
<dbReference type="GO" id="GO:0021697">
    <property type="term" value="P:cerebellar cortex formation"/>
    <property type="evidence" value="ECO:0007669"/>
    <property type="project" value="Ensembl"/>
</dbReference>
<dbReference type="GO" id="GO:0006935">
    <property type="term" value="P:chemotaxis"/>
    <property type="evidence" value="ECO:0000304"/>
    <property type="project" value="ProtInc"/>
</dbReference>
<dbReference type="GO" id="GO:0035987">
    <property type="term" value="P:endodermal cell differentiation"/>
    <property type="evidence" value="ECO:0007669"/>
    <property type="project" value="Ensembl"/>
</dbReference>
<dbReference type="GO" id="GO:0060502">
    <property type="term" value="P:epithelial cell proliferation involved in lung morphogenesis"/>
    <property type="evidence" value="ECO:0007669"/>
    <property type="project" value="Ensembl"/>
</dbReference>
<dbReference type="GO" id="GO:0038133">
    <property type="term" value="P:ERBB2-ERBB3 signaling pathway"/>
    <property type="evidence" value="ECO:0007669"/>
    <property type="project" value="Ensembl"/>
</dbReference>
<dbReference type="GO" id="GO:0070371">
    <property type="term" value="P:ERK1 and ERK2 cascade"/>
    <property type="evidence" value="ECO:0000304"/>
    <property type="project" value="Reactome"/>
</dbReference>
<dbReference type="GO" id="GO:0060324">
    <property type="term" value="P:face development"/>
    <property type="evidence" value="ECO:0007669"/>
    <property type="project" value="Ensembl"/>
</dbReference>
<dbReference type="GO" id="GO:0048313">
    <property type="term" value="P:Golgi inheritance"/>
    <property type="evidence" value="ECO:0007669"/>
    <property type="project" value="Ensembl"/>
</dbReference>
<dbReference type="GO" id="GO:0007507">
    <property type="term" value="P:heart development"/>
    <property type="evidence" value="ECO:0007669"/>
    <property type="project" value="Ensembl"/>
</dbReference>
<dbReference type="GO" id="GO:0048009">
    <property type="term" value="P:insulin-like growth factor receptor signaling pathway"/>
    <property type="evidence" value="ECO:0007669"/>
    <property type="project" value="Ensembl"/>
</dbReference>
<dbReference type="GO" id="GO:0030216">
    <property type="term" value="P:keratinocyte differentiation"/>
    <property type="evidence" value="ECO:0007669"/>
    <property type="project" value="Ensembl"/>
</dbReference>
<dbReference type="GO" id="GO:0060711">
    <property type="term" value="P:labyrinthine layer development"/>
    <property type="evidence" value="ECO:0007669"/>
    <property type="project" value="Ensembl"/>
</dbReference>
<dbReference type="GO" id="GO:0000165">
    <property type="term" value="P:MAPK cascade"/>
    <property type="evidence" value="ECO:0000318"/>
    <property type="project" value="GO_Central"/>
</dbReference>
<dbReference type="GO" id="GO:0032402">
    <property type="term" value="P:melanosome transport"/>
    <property type="evidence" value="ECO:0007669"/>
    <property type="project" value="Ensembl"/>
</dbReference>
<dbReference type="GO" id="GO:0042552">
    <property type="term" value="P:myelination"/>
    <property type="evidence" value="ECO:0007669"/>
    <property type="project" value="Ensembl"/>
</dbReference>
<dbReference type="GO" id="GO:0008285">
    <property type="term" value="P:negative regulation of cell population proliferation"/>
    <property type="evidence" value="ECO:0000314"/>
    <property type="project" value="BHF-UCL"/>
</dbReference>
<dbReference type="GO" id="GO:0010629">
    <property type="term" value="P:negative regulation of gene expression"/>
    <property type="evidence" value="ECO:0007669"/>
    <property type="project" value="Ensembl"/>
</dbReference>
<dbReference type="GO" id="GO:0034111">
    <property type="term" value="P:negative regulation of homotypic cell-cell adhesion"/>
    <property type="evidence" value="ECO:0007669"/>
    <property type="project" value="Ensembl"/>
</dbReference>
<dbReference type="GO" id="GO:1903298">
    <property type="term" value="P:negative regulation of hypoxia-induced intrinsic apoptotic signaling pathway"/>
    <property type="evidence" value="ECO:0007669"/>
    <property type="project" value="Ensembl"/>
</dbReference>
<dbReference type="GO" id="GO:0030182">
    <property type="term" value="P:neuron differentiation"/>
    <property type="evidence" value="ECO:0000318"/>
    <property type="project" value="GO_Central"/>
</dbReference>
<dbReference type="GO" id="GO:0048812">
    <property type="term" value="P:neuron projection morphogenesis"/>
    <property type="evidence" value="ECO:0007669"/>
    <property type="project" value="Ensembl"/>
</dbReference>
<dbReference type="GO" id="GO:0060674">
    <property type="term" value="P:placenta blood vessel development"/>
    <property type="evidence" value="ECO:0007669"/>
    <property type="project" value="Ensembl"/>
</dbReference>
<dbReference type="GO" id="GO:2001171">
    <property type="term" value="P:positive regulation of ATP biosynthetic process"/>
    <property type="evidence" value="ECO:0007669"/>
    <property type="project" value="Ensembl"/>
</dbReference>
<dbReference type="GO" id="GO:0010508">
    <property type="term" value="P:positive regulation of autophagy"/>
    <property type="evidence" value="ECO:0007669"/>
    <property type="project" value="Ensembl"/>
</dbReference>
<dbReference type="GO" id="GO:0050772">
    <property type="term" value="P:positive regulation of axonogenesis"/>
    <property type="evidence" value="ECO:0007669"/>
    <property type="project" value="Ensembl"/>
</dbReference>
<dbReference type="GO" id="GO:0030335">
    <property type="term" value="P:positive regulation of cell migration"/>
    <property type="evidence" value="ECO:0007669"/>
    <property type="project" value="Ensembl"/>
</dbReference>
<dbReference type="GO" id="GO:0045893">
    <property type="term" value="P:positive regulation of DNA-templated transcription"/>
    <property type="evidence" value="ECO:0000315"/>
    <property type="project" value="BHF-UCL"/>
</dbReference>
<dbReference type="GO" id="GO:1903226">
    <property type="term" value="P:positive regulation of endodermal cell differentiation"/>
    <property type="evidence" value="ECO:0007669"/>
    <property type="project" value="Ensembl"/>
</dbReference>
<dbReference type="GO" id="GO:0070374">
    <property type="term" value="P:positive regulation of ERK1 and ERK2 cascade"/>
    <property type="evidence" value="ECO:0000315"/>
    <property type="project" value="BHF-UCL"/>
</dbReference>
<dbReference type="GO" id="GO:0010628">
    <property type="term" value="P:positive regulation of gene expression"/>
    <property type="evidence" value="ECO:0000315"/>
    <property type="project" value="UniProtKB"/>
</dbReference>
<dbReference type="GO" id="GO:0045933">
    <property type="term" value="P:positive regulation of muscle contraction"/>
    <property type="evidence" value="ECO:0007669"/>
    <property type="project" value="Ensembl"/>
</dbReference>
<dbReference type="GO" id="GO:0071902">
    <property type="term" value="P:positive regulation of protein serine/threonine kinase activity"/>
    <property type="evidence" value="ECO:0000314"/>
    <property type="project" value="UniProtKB"/>
</dbReference>
<dbReference type="GO" id="GO:0046579">
    <property type="term" value="P:positive regulation of Ras protein signal transduction"/>
    <property type="evidence" value="ECO:0007669"/>
    <property type="project" value="Ensembl"/>
</dbReference>
<dbReference type="GO" id="GO:0032968">
    <property type="term" value="P:positive regulation of transcription elongation by RNA polymerase II"/>
    <property type="evidence" value="ECO:0007669"/>
    <property type="project" value="Ensembl"/>
</dbReference>
<dbReference type="GO" id="GO:0048679">
    <property type="term" value="P:regulation of axon regeneration"/>
    <property type="evidence" value="ECO:0007669"/>
    <property type="project" value="Ensembl"/>
</dbReference>
<dbReference type="GO" id="GO:2000641">
    <property type="term" value="P:regulation of early endosome to late endosome transport"/>
    <property type="evidence" value="ECO:0000304"/>
    <property type="project" value="UniProtKB"/>
</dbReference>
<dbReference type="GO" id="GO:0090170">
    <property type="term" value="P:regulation of Golgi inheritance"/>
    <property type="evidence" value="ECO:0000304"/>
    <property type="project" value="UniProtKB"/>
</dbReference>
<dbReference type="GO" id="GO:0098696">
    <property type="term" value="P:regulation of neurotransmitter receptor localization to postsynaptic specialization membrane"/>
    <property type="evidence" value="ECO:0007669"/>
    <property type="project" value="Ensembl"/>
</dbReference>
<dbReference type="GO" id="GO:0032872">
    <property type="term" value="P:regulation of stress-activated MAPK cascade"/>
    <property type="evidence" value="ECO:0000304"/>
    <property type="project" value="UniProtKB"/>
</dbReference>
<dbReference type="GO" id="GO:0003056">
    <property type="term" value="P:regulation of vascular associated smooth muscle contraction"/>
    <property type="evidence" value="ECO:0007669"/>
    <property type="project" value="Ensembl"/>
</dbReference>
<dbReference type="GO" id="GO:0048678">
    <property type="term" value="P:response to axon injury"/>
    <property type="evidence" value="ECO:0007669"/>
    <property type="project" value="Ensembl"/>
</dbReference>
<dbReference type="GO" id="GO:0051384">
    <property type="term" value="P:response to glucocorticoid"/>
    <property type="evidence" value="ECO:0007669"/>
    <property type="project" value="Ensembl"/>
</dbReference>
<dbReference type="GO" id="GO:0006979">
    <property type="term" value="P:response to oxidative stress"/>
    <property type="evidence" value="ECO:0007669"/>
    <property type="project" value="Ensembl"/>
</dbReference>
<dbReference type="GO" id="GO:0014044">
    <property type="term" value="P:Schwann cell development"/>
    <property type="evidence" value="ECO:0007669"/>
    <property type="project" value="Ensembl"/>
</dbReference>
<dbReference type="GO" id="GO:0007165">
    <property type="term" value="P:signal transduction"/>
    <property type="evidence" value="ECO:0000304"/>
    <property type="project" value="ProtInc"/>
</dbReference>
<dbReference type="GO" id="GO:0048538">
    <property type="term" value="P:thymus development"/>
    <property type="evidence" value="ECO:0007669"/>
    <property type="project" value="Ensembl"/>
</dbReference>
<dbReference type="GO" id="GO:0030878">
    <property type="term" value="P:thyroid gland development"/>
    <property type="evidence" value="ECO:0007669"/>
    <property type="project" value="Ensembl"/>
</dbReference>
<dbReference type="GO" id="GO:0060440">
    <property type="term" value="P:trachea formation"/>
    <property type="evidence" value="ECO:0007669"/>
    <property type="project" value="Ensembl"/>
</dbReference>
<dbReference type="GO" id="GO:0070328">
    <property type="term" value="P:triglyceride homeostasis"/>
    <property type="evidence" value="ECO:0007669"/>
    <property type="project" value="Ensembl"/>
</dbReference>
<dbReference type="GO" id="GO:0044342">
    <property type="term" value="P:type B pancreatic cell proliferation"/>
    <property type="evidence" value="ECO:0007669"/>
    <property type="project" value="Ensembl"/>
</dbReference>
<dbReference type="GO" id="GO:0047496">
    <property type="term" value="P:vesicle transport along microtubule"/>
    <property type="evidence" value="ECO:0007669"/>
    <property type="project" value="Ensembl"/>
</dbReference>
<dbReference type="CDD" id="cd06650">
    <property type="entry name" value="PKc_MEK1"/>
    <property type="match status" value="1"/>
</dbReference>
<dbReference type="FunFam" id="1.10.510.10:FF:000115">
    <property type="entry name" value="Dual specificity mitogen-activated protein kinase kinase 1"/>
    <property type="match status" value="1"/>
</dbReference>
<dbReference type="FunFam" id="3.30.200.20:FF:000100">
    <property type="entry name" value="Dual specificity mitogen-activated protein kinase kinase 1"/>
    <property type="match status" value="1"/>
</dbReference>
<dbReference type="Gene3D" id="3.30.200.20">
    <property type="entry name" value="Phosphorylase Kinase, domain 1"/>
    <property type="match status" value="1"/>
</dbReference>
<dbReference type="Gene3D" id="1.10.510.10">
    <property type="entry name" value="Transferase(Phosphotransferase) domain 1"/>
    <property type="match status" value="1"/>
</dbReference>
<dbReference type="InterPro" id="IPR011009">
    <property type="entry name" value="Kinase-like_dom_sf"/>
</dbReference>
<dbReference type="InterPro" id="IPR050915">
    <property type="entry name" value="MAP_kinase_kinase"/>
</dbReference>
<dbReference type="InterPro" id="IPR000719">
    <property type="entry name" value="Prot_kinase_dom"/>
</dbReference>
<dbReference type="InterPro" id="IPR017441">
    <property type="entry name" value="Protein_kinase_ATP_BS"/>
</dbReference>
<dbReference type="InterPro" id="IPR008271">
    <property type="entry name" value="Ser/Thr_kinase_AS"/>
</dbReference>
<dbReference type="PANTHER" id="PTHR47448">
    <property type="entry name" value="DUAL SPECIFICITY MITOGEN-ACTIVATED PROTEIN KINASE KINASE DSOR1-LIKE PROTEIN"/>
    <property type="match status" value="1"/>
</dbReference>
<dbReference type="PANTHER" id="PTHR47448:SF2">
    <property type="entry name" value="MITOGEN-ACTIVATED PROTEIN KINASE KINASE 1"/>
    <property type="match status" value="1"/>
</dbReference>
<dbReference type="Pfam" id="PF00069">
    <property type="entry name" value="Pkinase"/>
    <property type="match status" value="1"/>
</dbReference>
<dbReference type="SMART" id="SM00220">
    <property type="entry name" value="S_TKc"/>
    <property type="match status" value="1"/>
</dbReference>
<dbReference type="SUPFAM" id="SSF56112">
    <property type="entry name" value="Protein kinase-like (PK-like)"/>
    <property type="match status" value="1"/>
</dbReference>
<dbReference type="PROSITE" id="PS00107">
    <property type="entry name" value="PROTEIN_KINASE_ATP"/>
    <property type="match status" value="1"/>
</dbReference>
<dbReference type="PROSITE" id="PS50011">
    <property type="entry name" value="PROTEIN_KINASE_DOM"/>
    <property type="match status" value="1"/>
</dbReference>
<dbReference type="PROSITE" id="PS00108">
    <property type="entry name" value="PROTEIN_KINASE_ST"/>
    <property type="match status" value="1"/>
</dbReference>
<keyword id="KW-0002">3D-structure</keyword>
<keyword id="KW-0007">Acetylation</keyword>
<keyword id="KW-0025">Alternative splicing</keyword>
<keyword id="KW-0067">ATP-binding</keyword>
<keyword id="KW-0122">Cardiomyopathy</keyword>
<keyword id="KW-0963">Cytoplasm</keyword>
<keyword id="KW-0206">Cytoskeleton</keyword>
<keyword id="KW-0903">Direct protein sequencing</keyword>
<keyword id="KW-0225">Disease variant</keyword>
<keyword id="KW-0038">Ectodermal dysplasia</keyword>
<keyword id="KW-0991">Intellectual disability</keyword>
<keyword id="KW-0418">Kinase</keyword>
<keyword id="KW-0472">Membrane</keyword>
<keyword id="KW-0547">Nucleotide-binding</keyword>
<keyword id="KW-0539">Nucleus</keyword>
<keyword id="KW-0597">Phosphoprotein</keyword>
<keyword id="KW-1267">Proteomics identification</keyword>
<keyword id="KW-1185">Reference proteome</keyword>
<keyword id="KW-0723">Serine/threonine-protein kinase</keyword>
<keyword id="KW-0808">Transferase</keyword>
<keyword id="KW-0829">Tyrosine-protein kinase</keyword>
<proteinExistence type="evidence at protein level"/>
<reference key="1">
    <citation type="journal article" date="1992" name="J. Biol. Chem.">
        <title>Human T-cell mitogen-activated protein kinase kinases are related to yeast signal transduction kinases.</title>
        <authorList>
            <person name="Seger R."/>
            <person name="Seger D."/>
            <person name="Lozeman F.J."/>
            <person name="Ahn N.G."/>
            <person name="Graves L.M."/>
            <person name="Campbell J.S."/>
            <person name="Ericsson L."/>
            <person name="Harrylock M."/>
            <person name="Jensen A.M."/>
            <person name="Krebs E.G."/>
        </authorList>
    </citation>
    <scope>NUCLEOTIDE SEQUENCE [MRNA] (ISOFORMS 1 AND 2)</scope>
    <scope>PARTIAL PROTEIN SEQUENCE</scope>
    <scope>TISSUE SPECIFICITY</scope>
    <source>
        <tissue>T-cell</tissue>
    </source>
</reference>
<reference key="2">
    <citation type="journal article" date="1993" name="J. Biol. Chem.">
        <title>Cloning and characterization of two distinct human extracellular signal-regulated kinase activator kinases, MEK1 and MEK2.</title>
        <authorList>
            <person name="Zheng C.-F."/>
            <person name="Guan K.-L."/>
        </authorList>
    </citation>
    <scope>NUCLEOTIDE SEQUENCE [MRNA] (ISOFORM 1)</scope>
</reference>
<reference key="3">
    <citation type="journal article" date="1999" name="Mol. Cell. Biol.">
        <title>Kinase suppressor of Ras forms a multiprotein signaling complex and modulates MEK localization.</title>
        <authorList>
            <person name="Stewart S."/>
            <person name="Sundaram M."/>
            <person name="Zhang Y."/>
            <person name="Lee J."/>
            <person name="Han M."/>
            <person name="Guan K.L."/>
        </authorList>
    </citation>
    <scope>PROTEIN SEQUENCE OF 35-45; 48-57; 175-183 AND 344-353</scope>
    <scope>INTERACTION WITH KSR1</scope>
    <scope>SUBCELLULAR LOCATION</scope>
    <scope>PHOSPHORYLATION AT SER-218</scope>
</reference>
<reference key="4">
    <citation type="journal article" date="1994" name="EMBO J.">
        <title>Activation of MEK family kinases requires phosphorylation of two conserved Ser/Thr residues.</title>
        <authorList>
            <person name="Zheng C.-F."/>
            <person name="Guan K.-L."/>
        </authorList>
    </citation>
    <scope>PHOSPHORYLATION AT SER-218 AND SER-222</scope>
    <scope>MUTAGENESIS OF LYS-97; SER-150; SER-212; SER-218 AND SER-222</scope>
</reference>
<reference key="5">
    <citation type="journal article" date="1998" name="Science">
        <title>Proteolytic inactivation of MAP-kinase-kinase by anthrax lethal factor.</title>
        <authorList>
            <person name="Duesbery N.S."/>
            <person name="Webb C.P."/>
            <person name="Leppla S.H."/>
            <person name="Gordon V.M."/>
            <person name="Klimpel K.R."/>
            <person name="Copeland T.D."/>
            <person name="Ahn N.G."/>
            <person name="Oskarsson M.K."/>
            <person name="Fukasawa K."/>
            <person name="Paull K.D."/>
            <person name="Vande Woude G.F."/>
        </authorList>
    </citation>
    <scope>CLEAVAGE BY ANTHRAX LETHAL FACTOR</scope>
    <scope>PROTEIN SEQUENCE OF 9-17</scope>
</reference>
<reference key="6">
    <citation type="journal article" date="2000" name="Biochem. J.">
        <title>Susceptibility of mitogen-activated protein kinase kinase family members to proteolysis by anthrax lethal factor.</title>
        <authorList>
            <person name="Vitale G."/>
            <person name="Bernardi L."/>
            <person name="Napolitani G."/>
            <person name="Mock M."/>
            <person name="Montecucco C."/>
        </authorList>
    </citation>
    <scope>CLEAVAGE BY ANTHRAX LETHAL FACTOR</scope>
</reference>
<reference key="7">
    <citation type="journal article" date="2004" name="Oncogene">
        <title>The MAP kinase pathway is required for entry into mitosis and cell survival.</title>
        <authorList>
            <person name="Liu X."/>
            <person name="Yan S."/>
            <person name="Zhou T."/>
            <person name="Terada Y."/>
            <person name="Erikson R.L."/>
        </authorList>
    </citation>
    <scope>SUBCELLULAR LOCATION</scope>
    <scope>FUNCTION</scope>
</reference>
<reference key="8">
    <citation type="journal article" date="2005" name="J. Biol. Chem.">
        <title>Role of group A p21-activated kinases in activation of extracellular-regulated kinase by growth factors.</title>
        <authorList>
            <person name="Beeser A."/>
            <person name="Jaffer Z.M."/>
            <person name="Hofmann C."/>
            <person name="Chernoff J."/>
        </authorList>
    </citation>
    <scope>PHOSPHORYLATION AT SER-298</scope>
</reference>
<reference key="9">
    <citation type="journal article" date="2006" name="Science">
        <title>Yersinia YopJ acetylates and inhibits kinase activation by blocking phosphorylation.</title>
        <authorList>
            <person name="Mukherjee S."/>
            <person name="Keitany G."/>
            <person name="Li Y."/>
            <person name="Wang Y."/>
            <person name="Ball H.L."/>
            <person name="Goldsmith E.J."/>
            <person name="Orth K."/>
        </authorList>
    </citation>
    <scope>INTERACTION WITH YOPJ (MICROBIAL INFECTION)</scope>
    <scope>ACETYLATION</scope>
</reference>
<reference key="10">
    <citation type="journal article" date="2007" name="Mol. Cell. Biol.">
        <title>Interaction with MEK causes nuclear export and downregulation of peroxisome proliferator-activated receptor gamma.</title>
        <authorList>
            <person name="Burgermeister E."/>
            <person name="Chuderland D."/>
            <person name="Hanoch T."/>
            <person name="Meyer M."/>
            <person name="Liscovitch M."/>
            <person name="Seger R."/>
        </authorList>
    </citation>
    <scope>FUNCTION</scope>
    <scope>SUBCELLULAR LOCATION</scope>
    <scope>INTERACTION WITH PPARG</scope>
</reference>
<reference key="11">
    <citation type="journal article" date="2008" name="Cell">
        <title>Final stages of cytokinesis and midbody ring formation are controlled by BRUCE.</title>
        <authorList>
            <person name="Pohl C."/>
            <person name="Jentsch S."/>
        </authorList>
    </citation>
    <scope>INTERACTION WITH BIRC6/BRUCE</scope>
</reference>
<reference key="12">
    <citation type="journal article" date="2008" name="Mol. Cell">
        <title>Kinase-selective enrichment enables quantitative phosphoproteomics of the kinome across the cell cycle.</title>
        <authorList>
            <person name="Daub H."/>
            <person name="Olsen J.V."/>
            <person name="Bairlein M."/>
            <person name="Gnad F."/>
            <person name="Oppermann F.S."/>
            <person name="Korner R."/>
            <person name="Greff Z."/>
            <person name="Keri G."/>
            <person name="Stemmann O."/>
            <person name="Mann M."/>
        </authorList>
    </citation>
    <scope>PHOSPHORYLATION [LARGE SCALE ANALYSIS] AT THR-286</scope>
    <scope>IDENTIFICATION BY MASS SPECTROMETRY [LARGE SCALE ANALYSIS]</scope>
    <source>
        <tissue>Cervix carcinoma</tissue>
    </source>
</reference>
<reference key="13">
    <citation type="journal article" date="2009" name="J. Hepatol.">
        <title>Protein kinase SGK1 enhances MEK/ERK complex formation through the phosphorylation of ERK2: implication for the positive regulatory role of SGK1 on the ERK function during liver regeneration.</title>
        <authorList>
            <person name="Won M."/>
            <person name="Park K.A."/>
            <person name="Byun H.S."/>
            <person name="Kim Y.R."/>
            <person name="Choi B.L."/>
            <person name="Hong J.H."/>
            <person name="Park J."/>
            <person name="Seok J.H."/>
            <person name="Lee Y.H."/>
            <person name="Cho C.H."/>
            <person name="Song I.S."/>
            <person name="Kim Y.K."/>
            <person name="Shen H.M."/>
            <person name="Hur G.M."/>
        </authorList>
    </citation>
    <scope>INTERACTION WITH SGK1</scope>
</reference>
<reference key="14">
    <citation type="journal article" date="2009" name="Mol. Cell. Proteomics">
        <title>Large-scale proteomics analysis of the human kinome.</title>
        <authorList>
            <person name="Oppermann F.S."/>
            <person name="Gnad F."/>
            <person name="Olsen J.V."/>
            <person name="Hornberger R."/>
            <person name="Greff Z."/>
            <person name="Keri G."/>
            <person name="Mann M."/>
            <person name="Daub H."/>
        </authorList>
    </citation>
    <scope>IDENTIFICATION BY MASS SPECTROMETRY [LARGE SCALE ANALYSIS]</scope>
</reference>
<reference key="15">
    <citation type="journal article" date="2010" name="Mol. Cell. Biol.">
        <title>VRK2 inhibits mitogen-activated protein kinase signaling and inversely correlates with ErbB2 in human breast cancer.</title>
        <authorList>
            <person name="Fernandez I.F."/>
            <person name="Blanco S."/>
            <person name="Lozano J."/>
            <person name="Lazo P.A."/>
        </authorList>
    </citation>
    <scope>INTERACTION WITH VRK2</scope>
</reference>
<reference key="16">
    <citation type="journal article" date="1998" name="Oncogene">
        <title>Signaling by dual specificity kinases.</title>
        <authorList>
            <person name="Dhanasekaran N."/>
            <person name="Premkumar Reddy E."/>
        </authorList>
    </citation>
    <scope>REVIEW ON FUNCTION</scope>
</reference>
<reference key="17">
    <citation type="journal article" date="2004" name="Nat. Rev. Mol. Cell Biol.">
        <title>The RAF proteins take centre stage.</title>
        <authorList>
            <person name="Wellbrock C."/>
            <person name="Karasarides M."/>
            <person name="Marais R."/>
        </authorList>
    </citation>
    <scope>REVIEW ON ACTIVITY REGULATION</scope>
</reference>
<reference key="18">
    <citation type="journal article" date="2009" name="BioFactors">
        <title>The ERK signaling cascade--views from different subcellular compartments.</title>
        <authorList>
            <person name="Yao Z."/>
            <person name="Seger R."/>
        </authorList>
    </citation>
    <scope>REVIEW ON FUNCTION</scope>
</reference>
<reference key="19">
    <citation type="journal article" date="2011" name="BMC Syst. Biol.">
        <title>Initial characterization of the human central proteome.</title>
        <authorList>
            <person name="Burkard T.R."/>
            <person name="Planyavsky M."/>
            <person name="Kaupe I."/>
            <person name="Breitwieser F.P."/>
            <person name="Buerckstuemmer T."/>
            <person name="Bennett K.L."/>
            <person name="Superti-Furga G."/>
            <person name="Colinge J."/>
        </authorList>
    </citation>
    <scope>IDENTIFICATION BY MASS SPECTROMETRY [LARGE SCALE ANALYSIS]</scope>
</reference>
<reference key="20">
    <citation type="journal article" date="2011" name="Genes Cancer">
        <title>The ERK cascade: distinct functions within various subcellular organelles.</title>
        <authorList>
            <person name="Wortzel I."/>
            <person name="Seger R."/>
        </authorList>
    </citation>
    <scope>REVIEW ON FUNCTION</scope>
</reference>
<reference key="21">
    <citation type="journal article" date="2011" name="Mol. Cell. Biol.">
        <title>Nek10 mediates G2/M cell cycle arrest and MEK autoactivation in response to UV irradiation.</title>
        <authorList>
            <person name="Moniz L.S."/>
            <person name="Stambolic V."/>
        </authorList>
    </citation>
    <scope>MUTAGENESIS OF LYS-97</scope>
    <scope>INTERACTION WITH NEK10 AND RAF1</scope>
    <scope>PHOSPHORYLATION</scope>
</reference>
<reference key="22">
    <citation type="journal article" date="2014" name="J. Proteomics">
        <title>An enzyme assisted RP-RPLC approach for in-depth analysis of human liver phosphoproteome.</title>
        <authorList>
            <person name="Bian Y."/>
            <person name="Song C."/>
            <person name="Cheng K."/>
            <person name="Dong M."/>
            <person name="Wang F."/>
            <person name="Huang J."/>
            <person name="Sun D."/>
            <person name="Wang L."/>
            <person name="Ye M."/>
            <person name="Zou H."/>
        </authorList>
    </citation>
    <scope>IDENTIFICATION BY MASS SPECTROMETRY [LARGE SCALE ANALYSIS]</scope>
    <source>
        <tissue>Liver</tissue>
    </source>
</reference>
<reference key="23">
    <citation type="journal article" date="2015" name="J. Exp. Med.">
        <title>T cell development involves TRAF3IP3-mediated ERK signaling in the Golgi.</title>
        <authorList>
            <person name="Zou Q."/>
            <person name="Jin J."/>
            <person name="Xiao Y."/>
            <person name="Hu H."/>
            <person name="Zhou X."/>
            <person name="Jie Z."/>
            <person name="Xie X."/>
            <person name="Li J.Y."/>
            <person name="Cheng X."/>
            <person name="Sun S.C."/>
        </authorList>
    </citation>
    <scope>INTERACTION WITH TRAF3IP3</scope>
</reference>
<reference key="24">
    <citation type="journal article" date="2018" name="Nature">
        <title>MEK drives BRAF activation through allosteric control of KSR proteins.</title>
        <authorList>
            <person name="Lavoie H."/>
            <person name="Sahmi M."/>
            <person name="Maisonneuve P."/>
            <person name="Marullo S.A."/>
            <person name="Thevakumaran N."/>
            <person name="Jin T."/>
            <person name="Kurinov I."/>
            <person name="Sicheri F."/>
            <person name="Therrien M."/>
        </authorList>
    </citation>
    <scope>FUNCTION</scope>
    <scope>ACTIVITY REGULATION</scope>
    <scope>INTERACTION WITH BRAF; KSR1 AND KSR2</scope>
    <scope>PHOSPHORYLATION AT SER-218 AND SER-222</scope>
    <scope>MUTAGENESIS OF LYS-97; SER-218; MET-219; ALA-220; ASN-221; SER-222 AND PHE-311</scope>
</reference>
<reference key="25">
    <citation type="journal article" date="2020" name="Am. J. Hum. Genet.">
        <title>Enhanced MAPK1 function causes a neurodevelopmental disorder within the RASopathy clinical spectrum.</title>
        <authorList>
            <person name="Motta M."/>
            <person name="Pannone L."/>
            <person name="Pantaleoni F."/>
            <person name="Bocchinfuso G."/>
            <person name="Radio F.C."/>
            <person name="Cecchetti S."/>
            <person name="Ciolfi A."/>
            <person name="Di Rocco M."/>
            <person name="Elting M.W."/>
            <person name="Brilstra E.H."/>
            <person name="Boni S."/>
            <person name="Mazzanti L."/>
            <person name="Tamburrino F."/>
            <person name="Walsh L."/>
            <person name="Payne K."/>
            <person name="Fernandez-Jaen A."/>
            <person name="Ganapathi M."/>
            <person name="Chung W.K."/>
            <person name="Grange D.K."/>
            <person name="Dave-Wala A."/>
            <person name="Reshmi S.C."/>
            <person name="Bartholomew D.W."/>
            <person name="Mouhlas D."/>
            <person name="Carpentieri G."/>
            <person name="Bruselles A."/>
            <person name="Pizzi S."/>
            <person name="Bellacchio E."/>
            <person name="Piceci-Sparascio F."/>
            <person name="Lissewski C."/>
            <person name="Brinkmann J."/>
            <person name="Waclaw R.R."/>
            <person name="Waisfisz Q."/>
            <person name="van Gassen K."/>
            <person name="Wentzensen I.M."/>
            <person name="Morrow M.M."/>
            <person name="Alvarez S."/>
            <person name="Martinez-Garcia M."/>
            <person name="De Luca A."/>
            <person name="Memo L."/>
            <person name="Zampino G."/>
            <person name="Rossi C."/>
            <person name="Seri M."/>
            <person name="Gelb B.D."/>
            <person name="Zenker M."/>
            <person name="Dallapiccola B."/>
            <person name="Stella L."/>
            <person name="Prada C.E."/>
            <person name="Martinelli S."/>
            <person name="Flex E."/>
            <person name="Tartaglia M."/>
        </authorList>
    </citation>
    <scope>INTERACTION WITH MAPK1</scope>
</reference>
<reference key="26">
    <citation type="journal article" date="2021" name="EMBO Mol. Med.">
        <title>Biallelic mutations in MOS cause female infertility characterized by human early embryonic arrest and fragmentation.</title>
        <authorList>
            <person name="Zhang Y.L."/>
            <person name="Zheng W."/>
            <person name="Ren P."/>
            <person name="Hu H."/>
            <person name="Tong X."/>
            <person name="Zhang S.P."/>
            <person name="Li X."/>
            <person name="Wang H."/>
            <person name="Jiang J.C."/>
            <person name="Jin J."/>
            <person name="Yang W."/>
            <person name="Cao L."/>
            <person name="He Y."/>
            <person name="Ma Y."/>
            <person name="Zhang Y."/>
            <person name="Gu Y."/>
            <person name="Hu L."/>
            <person name="Luo K."/>
            <person name="Gong F."/>
            <person name="Lu G.X."/>
            <person name="Lin G."/>
            <person name="Fan H.Y."/>
            <person name="Zhang S."/>
        </authorList>
    </citation>
    <scope>INTERACTION WITH MOS</scope>
</reference>
<reference key="27">
    <citation type="journal article" date="2022" name="Hum. Reprod.">
        <title>Biallelic variants in MOS cause large polar body in oocyte and human female infertility.</title>
        <authorList>
            <person name="Zhang Y.L."/>
            <person name="Zheng W."/>
            <person name="Ren P."/>
            <person name="Jin J."/>
            <person name="Hu Z."/>
            <person name="Liu Q."/>
            <person name="Fan H.Y."/>
            <person name="Gong F."/>
            <person name="Lu G.X."/>
            <person name="Lin G."/>
            <person name="Zhang S."/>
            <person name="Tong X."/>
        </authorList>
    </citation>
    <scope>INTERACTION WITH MOS</scope>
</reference>
<reference evidence="38" key="28">
    <citation type="journal article" date="2004" name="Nat. Struct. Mol. Biol.">
        <title>Structures of human MAP kinase kinase 1 (MEK1) and MEK2 describe novel noncompetitive kinase inhibition.</title>
        <authorList>
            <person name="Ohren J.F."/>
            <person name="Chen H."/>
            <person name="Pavlovsky A."/>
            <person name="Whitehead C."/>
            <person name="Zhang E."/>
            <person name="Kuffa P."/>
            <person name="Yan C."/>
            <person name="McConnell P."/>
            <person name="Spessard C."/>
            <person name="Banotai C."/>
            <person name="Mueller W.T."/>
            <person name="Delaney A."/>
            <person name="Omer C."/>
            <person name="Sebolt-Leopold J."/>
            <person name="Dudley D.T."/>
            <person name="Leung I.K."/>
            <person name="Flamme C."/>
            <person name="Warmus J."/>
            <person name="Kaufman M."/>
            <person name="Barrett S."/>
            <person name="Tecle H."/>
            <person name="Hasemann C.A."/>
        </authorList>
    </citation>
    <scope>X-RAY CRYSTALLOGRAPHY (2.4 ANGSTROMS) OF 62-392 IN COMPLEX WITH ATP AND INHIBITOR</scope>
</reference>
<reference evidence="39" key="29">
    <citation type="journal article" date="2007" name="J. Med. Chem.">
        <title>4-anilino-5-carboxamido-2-pyridone derivatives as noncompetitive inhibitors of mitogen-activated protein kinase kinase.</title>
        <authorList>
            <person name="Spicer J.A."/>
            <person name="Rewcastle G.W."/>
            <person name="Kaufman M.D."/>
            <person name="Black S.L."/>
            <person name="Plummer M.S."/>
            <person name="Denny W.A."/>
            <person name="Quin J. III"/>
            <person name="Shahripour A.B."/>
            <person name="Barrett S.D."/>
            <person name="Whitehead C.E."/>
            <person name="Milbank J.B."/>
            <person name="Ohren J.F."/>
            <person name="Gowan R.C."/>
            <person name="Omer C."/>
            <person name="Camp H.S."/>
            <person name="Esmaeil N."/>
            <person name="Moore K."/>
            <person name="Sebolt-Leopold J.S."/>
            <person name="Pryzbranowski S."/>
            <person name="Merriman R.L."/>
            <person name="Ortwine D.F."/>
            <person name="Warmus J.S."/>
            <person name="Flamme C.M."/>
            <person name="Pavlovsky A.G."/>
            <person name="Tecle H."/>
        </authorList>
    </citation>
    <scope>X-RAY CRYSTALLOGRAPHY (2.8 ANGSTROMS) OF 62-393 IN COMPLEX WITH ATP AND INHIBITOR</scope>
</reference>
<reference evidence="43" key="30">
    <citation type="journal article" date="2008" name="Bioorg. Med. Chem. Lett.">
        <title>2-Alkylamino- and alkoxy-substituted 2-amino-1,3,4-oxadiazoles-O-Alkyl benzohydroxamate esters replacements retain the desired inhibition and selectivity against MEK (MAP ERK kinase).</title>
        <authorList>
            <person name="Warmus J.S."/>
            <person name="Flamme C."/>
            <person name="Zhang L.Y."/>
            <person name="Barrett S."/>
            <person name="Bridges A."/>
            <person name="Chen H."/>
            <person name="Gowan R."/>
            <person name="Kaufman M."/>
            <person name="Sebolt-Leopold J."/>
            <person name="Leopold W."/>
            <person name="Merriman R."/>
            <person name="Ohren J."/>
            <person name="Pavlovsky A."/>
            <person name="Przybranowski S."/>
            <person name="Tecle H."/>
            <person name="Valik H."/>
            <person name="Whitehead C."/>
            <person name="Zhang E."/>
        </authorList>
    </citation>
    <scope>X-RAY CRYSTALLOGRAPHY (2.62 ANGSTROMS) OF 62-393 IN COMPLEX WITH ATP AND INHIBITOR</scope>
</reference>
<reference evidence="44 45 46 47 48 49" key="31">
    <citation type="journal article" date="2009" name="Biochemistry">
        <title>Crystal structures of MEK1 binary and ternary complexes with nucleotides and inhibitors.</title>
        <authorList>
            <person name="Fischmann T.O."/>
            <person name="Smith C.K."/>
            <person name="Mayhood T.W."/>
            <person name="Myers J.E."/>
            <person name="Reichert P."/>
            <person name="Mannarino A."/>
            <person name="Carr D."/>
            <person name="Zhu H."/>
            <person name="Wong J."/>
            <person name="Yang R.S."/>
            <person name="Le H.V."/>
            <person name="Madison V.S."/>
        </authorList>
    </citation>
    <scope>X-RAY CRYSTALLOGRAPHY (1.8 ANGSTROMS) OF 35-393 IN COMPLEX WITH ADP AND INHIBITOR</scope>
</reference>
<reference evidence="40 41" key="32">
    <citation type="journal article" date="2009" name="Bioorg. Med. Chem. Lett.">
        <title>Beyond the MEK-pocket: can current MEK kinase inhibitors be utilized to synthesize novel type III NCKIs? Does the MEK-pocket exist in kinases other than MEK?</title>
        <authorList>
            <person name="Tecle H."/>
            <person name="Shao J."/>
            <person name="Li Y."/>
            <person name="Kothe M."/>
            <person name="Kazmirski S."/>
            <person name="Penzotti J."/>
            <person name="Ding Y.H."/>
            <person name="Ohren J."/>
            <person name="Moshinsky D."/>
            <person name="Coli R."/>
            <person name="Jhawar N."/>
            <person name="Bora E."/>
            <person name="Jacques-O'Hagan S."/>
            <person name="Wu J."/>
        </authorList>
    </citation>
    <scope>X-RAY CRYSTALLOGRAPHY (2.3 ANGSTROMS) OF 62-382 IN COMPLEX WITH ATP AND INHIBITOR</scope>
</reference>
<reference evidence="42" key="33">
    <citation type="journal article" date="2009" name="Cancer Res.">
        <title>RDEA119/BAY 869766: a potent, selective, allosteric inhibitor of MEK1/2 for the treatment of cancer.</title>
        <authorList>
            <person name="Iverson C."/>
            <person name="Larson G."/>
            <person name="Lai C."/>
            <person name="Yeh L.T."/>
            <person name="Dadson C."/>
            <person name="Weingarten P."/>
            <person name="Appleby T."/>
            <person name="Vo T."/>
            <person name="Maderna A."/>
            <person name="Vernier J.M."/>
            <person name="Hamatake R."/>
            <person name="Miner J.N."/>
            <person name="Quart B."/>
        </authorList>
    </citation>
    <scope>X-RAY CRYSTALLOGRAPHY (2.5 ANGSTROMS) OF 62-393 IN COMPLEX WITH ATP AND INHIBITOR</scope>
</reference>
<reference evidence="50" key="34">
    <citation type="journal article" date="2010" name="Bioorg. Med. Chem. Lett.">
        <title>Structure-based design and synthesis of pyrrole derivatives as MEK inhibitors.</title>
        <authorList>
            <person name="Wallace M.B."/>
            <person name="Adams M.E."/>
            <person name="Kanouni T."/>
            <person name="Mol C.D."/>
            <person name="Dougan D.R."/>
            <person name="Feher V.A."/>
            <person name="O'Connell S.M."/>
            <person name="Shi L."/>
            <person name="Halkowycz P."/>
            <person name="Dong Q."/>
        </authorList>
    </citation>
    <scope>X-RAY CRYSTALLOGRAPHY (2.6 ANGSTROMS) OF 62-382 IN COMPLEX WITH ADP AND INHIBITOR</scope>
</reference>
<reference evidence="53" key="35">
    <citation type="journal article" date="2011" name="Bioorg. Med. Chem. Lett.">
        <title>Discovery of TAK-733, a potent and selective MEK allosteric site inhibitor for the treatment of cancer.</title>
        <authorList>
            <person name="Dong Q."/>
            <person name="Dougan D.R."/>
            <person name="Gong X."/>
            <person name="Halkowycz P."/>
            <person name="Jin B."/>
            <person name="Kanouni T."/>
            <person name="O'Connell S.M."/>
            <person name="Scorah N."/>
            <person name="Shi L."/>
            <person name="Wallace M.B."/>
            <person name="Zhou F."/>
        </authorList>
    </citation>
    <scope>X-RAY CRYSTALLOGRAPHY (2.7 ANGSTROMS) OF 62-382 IN COMPLEX WITH ATP AND INHIBITOR</scope>
</reference>
<reference evidence="51 52" key="36">
    <citation type="journal article" date="2011" name="Bioorg. Med. Chem. Lett.">
        <title>Design and synthesis of novel allosteric MEK inhibitor CH4987655 as an orally available anticancer agent.</title>
        <authorList>
            <person name="Isshiki Y."/>
            <person name="Kohchi Y."/>
            <person name="Iikura H."/>
            <person name="Matsubara Y."/>
            <person name="Asoh K."/>
            <person name="Murata T."/>
            <person name="Kohchi M."/>
            <person name="Mizuguchi E."/>
            <person name="Tsujii S."/>
            <person name="Hattori K."/>
            <person name="Miura T."/>
            <person name="Yoshimura Y."/>
            <person name="Aida S."/>
            <person name="Miwa M."/>
            <person name="Saitoh R."/>
            <person name="Murao N."/>
            <person name="Okabe H."/>
            <person name="Belunis C."/>
            <person name="Janson C."/>
            <person name="Lukacs C."/>
            <person name="Schuck V."/>
            <person name="Shimma N."/>
        </authorList>
    </citation>
    <scope>X-RAY CRYSTALLOGRAPHY (2.8 ANGSTROMS) OF 62-393 IN COMPLEX WITH ATP AND INHIBITOR</scope>
</reference>
<reference key="37">
    <citation type="journal article" date="2006" name="Science">
        <title>Germline mutations in genes within the MAPK pathway cause cardio-facio-cutaneous syndrome.</title>
        <authorList>
            <person name="Rodriguez-Viciana P."/>
            <person name="Tetsu O."/>
            <person name="Tidyman W.E."/>
            <person name="Estep A.L."/>
            <person name="Conger B.A."/>
            <person name="Cruz M.S."/>
            <person name="McCormick F."/>
            <person name="Rauen K.A."/>
        </authorList>
    </citation>
    <scope>VARIANTS CFC3 SER-53 AND CYS-130</scope>
</reference>
<reference key="38">
    <citation type="journal article" date="2008" name="Clin. Genet.">
        <title>Mutation and phenotypic spectrum in patients with cardio-facio-cutaneous and Costello syndrome.</title>
        <authorList>
            <person name="Schulz A.L."/>
            <person name="Albrecht B."/>
            <person name="Arici C."/>
            <person name="van der Burgt I."/>
            <person name="Buske A."/>
            <person name="Gillessen-Kaesbach G."/>
            <person name="Heller R."/>
            <person name="Horn D."/>
            <person name="Hubner C.A."/>
            <person name="Korenke G.C."/>
            <person name="Konig R."/>
            <person name="Kress W."/>
            <person name="Kruger G."/>
            <person name="Meinecke P."/>
            <person name="Mucke J."/>
            <person name="Plecko B."/>
            <person name="Rossier E."/>
            <person name="Schinzel A."/>
            <person name="Schulze A."/>
            <person name="Seemanova E."/>
            <person name="Seidel H."/>
            <person name="Spranger S."/>
            <person name="Tuysuz B."/>
            <person name="Uhrig S."/>
            <person name="Wieczorek D."/>
            <person name="Kutsche K."/>
            <person name="Zenker M."/>
        </authorList>
    </citation>
    <scope>VARIANT CFC3 VAL-128</scope>
</reference>
<reference key="39">
    <citation type="journal article" date="2018" name="Nat. Commun.">
        <title>Somatic activating mutations in MAP2K1 cause melorheostosis.</title>
        <authorList>
            <person name="Kang H."/>
            <person name="Jha S."/>
            <person name="Deng Z."/>
            <person name="Fratzl-Zelman N."/>
            <person name="Cabral W.A."/>
            <person name="Ivovic A."/>
            <person name="Meylan F."/>
            <person name="Hanson E.P."/>
            <person name="Lange E."/>
            <person name="Katz J."/>
            <person name="Roschger P."/>
            <person name="Klaushofer K."/>
            <person name="Cowen E.W."/>
            <person name="Siegel R.M."/>
            <person name="Marini J.C."/>
            <person name="Bhattacharyya T."/>
        </authorList>
    </citation>
    <scope>INVOLVEMENT IN MEL</scope>
    <scope>VARIANTS MEL PRO-56; ASN-57 AND GLU-57</scope>
    <scope>CHARACTERIZATION OF VARIANT MEL ASN-57</scope>
</reference>
<gene>
    <name evidence="37" type="primary">MAP2K1</name>
    <name type="synonym">MEK1</name>
    <name type="synonym">PRKMK1</name>
</gene>
<accession>Q02750</accession>
<comment type="function">
    <text evidence="10 15 29">Dual specificity protein kinase which acts as an essential component of the MAP kinase signal transduction pathway. Binding of extracellular ligands such as growth factors, cytokines and hormones to their cell-surface receptors activates RAS and this initiates RAF1 activation. RAF1 then further activates the dual-specificity protein kinases MAP2K1/MEK1 and MAP2K2/MEK2. Both MAP2K1/MEK1 and MAP2K2/MEK2 function specifically in the MAPK/ERK cascade, and catalyze the concomitant phosphorylation of a threonine and a tyrosine residue in a Thr-Glu-Tyr sequence located in the extracellular signal-regulated kinases MAPK3/ERK1 and MAPK1/ERK2, leading to their activation and further transduction of the signal within the MAPK/ERK cascade. Activates BRAF in a KSR1 or KSR2-dependent manner; by binding to KSR1 or KSR2 releases the inhibitory intramolecular interaction between KSR1 or KSR2 protein kinase and N-terminal domains which promotes KSR1 or KSR2-BRAF dimerization and BRAF activation (PubMed:29433126). Depending on the cellular context, this pathway mediates diverse biological functions such as cell growth, adhesion, survival and differentiation, predominantly through the regulation of transcription, metabolism and cytoskeletal rearrangements. One target of the MAPK/ERK cascade is peroxisome proliferator-activated receptor gamma (PPARG), a nuclear receptor that promotes differentiation and apoptosis. MAP2K1/MEK1 has been shown to export PPARG from the nucleus. The MAPK/ERK cascade is also involved in the regulation of endosomal dynamics, including lysosome processing and endosome cycling through the perinuclear recycling compartment (PNRC), as well as in the fragmentation of the Golgi apparatus during mitosis.</text>
</comment>
<comment type="catalytic activity">
    <reaction>
        <text>L-seryl-[protein] + ATP = O-phospho-L-seryl-[protein] + ADP + H(+)</text>
        <dbReference type="Rhea" id="RHEA:17989"/>
        <dbReference type="Rhea" id="RHEA-COMP:9863"/>
        <dbReference type="Rhea" id="RHEA-COMP:11604"/>
        <dbReference type="ChEBI" id="CHEBI:15378"/>
        <dbReference type="ChEBI" id="CHEBI:29999"/>
        <dbReference type="ChEBI" id="CHEBI:30616"/>
        <dbReference type="ChEBI" id="CHEBI:83421"/>
        <dbReference type="ChEBI" id="CHEBI:456216"/>
        <dbReference type="EC" id="2.7.12.2"/>
    </reaction>
</comment>
<comment type="catalytic activity">
    <reaction>
        <text>L-threonyl-[protein] + ATP = O-phospho-L-threonyl-[protein] + ADP + H(+)</text>
        <dbReference type="Rhea" id="RHEA:46608"/>
        <dbReference type="Rhea" id="RHEA-COMP:11060"/>
        <dbReference type="Rhea" id="RHEA-COMP:11605"/>
        <dbReference type="ChEBI" id="CHEBI:15378"/>
        <dbReference type="ChEBI" id="CHEBI:30013"/>
        <dbReference type="ChEBI" id="CHEBI:30616"/>
        <dbReference type="ChEBI" id="CHEBI:61977"/>
        <dbReference type="ChEBI" id="CHEBI:456216"/>
        <dbReference type="EC" id="2.7.12.2"/>
    </reaction>
</comment>
<comment type="catalytic activity">
    <reaction>
        <text>L-tyrosyl-[protein] + ATP = O-phospho-L-tyrosyl-[protein] + ADP + H(+)</text>
        <dbReference type="Rhea" id="RHEA:10596"/>
        <dbReference type="Rhea" id="RHEA-COMP:10136"/>
        <dbReference type="Rhea" id="RHEA-COMP:20101"/>
        <dbReference type="ChEBI" id="CHEBI:15378"/>
        <dbReference type="ChEBI" id="CHEBI:30616"/>
        <dbReference type="ChEBI" id="CHEBI:46858"/>
        <dbReference type="ChEBI" id="CHEBI:61978"/>
        <dbReference type="ChEBI" id="CHEBI:456216"/>
        <dbReference type="EC" id="2.7.12.2"/>
    </reaction>
</comment>
<comment type="activity regulation">
    <text evidence="4 11 16 19 20 21 23 24 27 29">Ras proteins such as HRAS mediate the activation of RAF proteins such as RAF1 or BRAF which in turn activate extracellular signal-regulated kinases (ERK) through MAPK (mitogen-activated protein kinases) and ERK kinases MAP2K1/MEK1 and MAP2K2/MEK2 (PubMed:29433126). Activation occurs through phosphorylation of Ser-218 and Ser-222 (By similarity). MAP2K1/MEK1 binds KSR1 or KSR2 releasing the inhibitory intramolecular interaction between KSR1 or KSR2 protein kinase and N-terminal domains (PubMed:29433126). This allows KSR1 or KSR2 dimerization with BRAF leading to BRAF activation and phosphorylation of MAP2K1 (PubMed:29433126). MAP2K1/MEK1 is also the target of negative feed-back regulation by its substrate kinases, such as MAPK1/ERK2. These phosphorylate MAP2K1/MEK1 on Thr-292, thereby facilitating dephosphorylation of the activating residues Ser-218 and Ser-222. Inhibited by serine/threonine phosphatase 2A (By similarity). Many inhibitors have been identified including pyrrole derivatives, TAK-733 (one of a series of 8-methylpyrido[2,3-d]pyrimidine-4,7(3H,8H)-dione derivatives), CH4987655 and RDEA119/BAY 869766 (PubMed:15543157, PubMed:17880056, PubMed:18951019, PubMed:19019675, PubMed:19161339, PubMed:19706763, PubMed:20621728, PubMed:21310613).</text>
</comment>
<comment type="subunit">
    <text evidence="2 3 4 8 15 18 22 25 26 28 29 31 32 33">Found in a complex with at least BRAF, HRAS, MAP2K1, MAPK3/ERK1 and RGS14 (By similarity). Forms a heterodimer with MAP2K2/MEK2 (By similarity). Forms heterodimers with KSR2 which further dimerize to form tetramers (By similarity). Interacts with KSR1 or KSR2 and BRAF; the interaction with KSR1 or KSR2 mediates KSR1-BRAF or KSR2-BRAF dimerization (PubMed:10409742, PubMed:29433126). Interacts with ARBB2, LAMTOR3 and RAF1 (By similarity). Interacts with MAPK1/ERK2 (PubMed:32721402). Interacts with MORG1 (By similarity). Interacts with PPARG (PubMed:17101779). Interacts with isoform 1 of VRK2 (PubMed:20679487). Interacts with SGK1 (PubMed:19447520). Interacts with BIRC6/bruce (PubMed:18329369). Interacts with KAT7; the interaction promotes KAT7 phosphorylation (By similarity). Interacts with RAF1 and NEK10; the interaction is required for ERK1/2-signaling pathway activation in response to UV irradiation (PubMed:20956560). Interacts with TRAF3IP3 (PubMed:26195727). Interacts with MOS (PubMed:34779126, PubMed:35670744).</text>
</comment>
<comment type="subunit">
    <text evidence="14">(Microbial infection) Interacts with Yersinia YopJ.</text>
</comment>
<comment type="interaction">
    <interactant intactId="EBI-492564">
        <id>Q02750</id>
    </interactant>
    <interactant intactId="EBI-744695">
        <id>Q8N9N5</id>
        <label>BANP</label>
    </interactant>
    <organismsDiffer>false</organismsDiffer>
    <experiments>3</experiments>
</comment>
<comment type="interaction">
    <interactant intactId="EBI-492564">
        <id>Q02750</id>
    </interactant>
    <interactant intactId="EBI-11524452">
        <id>Q8N9N5-2</id>
        <label>BANP</label>
    </interactant>
    <organismsDiffer>false</organismsDiffer>
    <experiments>3</experiments>
</comment>
<comment type="interaction">
    <interactant intactId="EBI-492564">
        <id>Q02750</id>
    </interactant>
    <interactant intactId="EBI-1765160">
        <id>Q9NR09</id>
        <label>BIRC6</label>
    </interactant>
    <organismsDiffer>false</organismsDiffer>
    <experiments>2</experiments>
</comment>
<comment type="interaction">
    <interactant intactId="EBI-492564">
        <id>Q02750</id>
    </interactant>
    <interactant intactId="EBI-365980">
        <id>P15056</id>
        <label>BRAF</label>
    </interactant>
    <organismsDiffer>false</organismsDiffer>
    <experiments>63</experiments>
</comment>
<comment type="interaction">
    <interactant intactId="EBI-492564">
        <id>Q02750</id>
    </interactant>
    <interactant intactId="EBI-307461">
        <id>Q9Y297</id>
        <label>BTRC</label>
    </interactant>
    <organismsDiffer>false</organismsDiffer>
    <experiments>3</experiments>
</comment>
<comment type="interaction">
    <interactant intactId="EBI-492564">
        <id>Q02750</id>
    </interactant>
    <interactant intactId="EBI-4567563">
        <id>O15519-1</id>
        <label>CFLAR</label>
    </interactant>
    <organismsDiffer>false</organismsDiffer>
    <experiments>3</experiments>
</comment>
<comment type="interaction">
    <interactant intactId="EBI-492564">
        <id>Q02750</id>
    </interactant>
    <interactant intactId="EBI-959949">
        <id>P28482</id>
        <label>MAPK1</label>
    </interactant>
    <organismsDiffer>false</organismsDiffer>
    <experiments>2</experiments>
</comment>
<comment type="interaction">
    <interactant intactId="EBI-492564">
        <id>Q02750</id>
    </interactant>
    <interactant intactId="EBI-73995">
        <id>P27361</id>
        <label>MAPK3</label>
    </interactant>
    <organismsDiffer>false</organismsDiffer>
    <experiments>2</experiments>
</comment>
<comment type="interaction">
    <interactant intactId="EBI-492564">
        <id>Q02750</id>
    </interactant>
    <interactant intactId="EBI-714158">
        <id>Q13526</id>
        <label>PIN1</label>
    </interactant>
    <organismsDiffer>false</organismsDiffer>
    <experiments>5</experiments>
</comment>
<comment type="interaction">
    <interactant intactId="EBI-492564">
        <id>Q02750</id>
    </interactant>
    <interactant intactId="EBI-742388">
        <id>Q9H8W4</id>
        <label>PLEKHF2</label>
    </interactant>
    <organismsDiffer>false</organismsDiffer>
    <experiments>3</experiments>
</comment>
<comment type="interaction">
    <interactant intactId="EBI-492564">
        <id>Q02750</id>
    </interactant>
    <interactant intactId="EBI-365996">
        <id>P04049</id>
        <label>RAF1</label>
    </interactant>
    <organismsDiffer>false</organismsDiffer>
    <experiments>39</experiments>
</comment>
<comment type="interaction">
    <interactant intactId="EBI-492564">
        <id>Q02750</id>
    </interactant>
    <interactant intactId="EBI-17721485">
        <id>Q8WWU5-7</id>
        <label>TCP11</label>
    </interactant>
    <organismsDiffer>false</organismsDiffer>
    <experiments>3</experiments>
</comment>
<comment type="interaction">
    <interactant intactId="EBI-492564">
        <id>Q02750</id>
    </interactant>
    <interactant intactId="EBI-1207615">
        <id>Q86Y07</id>
        <label>VRK2</label>
    </interactant>
    <organismsDiffer>false</organismsDiffer>
    <experiments>2</experiments>
</comment>
<comment type="interaction">
    <interactant intactId="EBI-492564">
        <id>Q02750</id>
    </interactant>
    <interactant intactId="EBI-1207633">
        <id>Q86Y07-1</id>
        <label>VRK2</label>
    </interactant>
    <organismsDiffer>false</organismsDiffer>
    <experiments>2</experiments>
</comment>
<comment type="interaction">
    <interactant intactId="EBI-492564">
        <id>Q02750</id>
    </interactant>
    <interactant intactId="EBI-1044059">
        <id>P46937</id>
        <label>YAP1</label>
    </interactant>
    <organismsDiffer>false</organismsDiffer>
    <experiments>3</experiments>
</comment>
<comment type="subcellular location">
    <subcellularLocation>
        <location evidence="10">Cytoplasm</location>
        <location evidence="10">Cytoskeleton</location>
        <location evidence="10">Microtubule organizing center</location>
        <location evidence="10">Centrosome</location>
    </subcellularLocation>
    <subcellularLocation>
        <location evidence="10">Cytoplasm</location>
        <location evidence="10">Cytoskeleton</location>
        <location evidence="10">Microtubule organizing center</location>
        <location evidence="10">Spindle pole body</location>
    </subcellularLocation>
    <subcellularLocation>
        <location evidence="8 15">Cytoplasm</location>
    </subcellularLocation>
    <subcellularLocation>
        <location evidence="15">Nucleus</location>
    </subcellularLocation>
    <subcellularLocation>
        <location evidence="8">Membrane</location>
        <topology evidence="8">Peripheral membrane protein</topology>
    </subcellularLocation>
    <text evidence="8 10">Localizes at centrosomes during prometaphase, midzone during anaphase and midbody during telophase/cytokinesis (PubMed:14737111). Membrane localization is probably regulated by its interaction with KSR1 (PubMed:10409742).</text>
</comment>
<comment type="alternative products">
    <event type="alternative splicing"/>
    <isoform>
        <id>Q02750-1</id>
        <name>1</name>
        <name>MKK1a</name>
        <sequence type="displayed"/>
    </isoform>
    <isoform>
        <id>Q02750-2</id>
        <name>2</name>
        <name>MKK1b</name>
        <sequence type="described" ref="VSP_040500"/>
    </isoform>
</comment>
<comment type="tissue specificity">
    <text evidence="9">Widely expressed, with extremely low levels in brain.</text>
</comment>
<comment type="domain">
    <text evidence="1">The proline-rich region localized between residues 270 and 307 is important for binding to RAF1 and activation of MAP2K1/MEK1.</text>
</comment>
<comment type="PTM">
    <text evidence="12 26 29 34">Phosphorylation at Ser-218 and Ser-222 by MAP kinase kinase kinases (BRAF or MEKK1) positively regulates kinase activity (PubMed:29433126, PubMed:8131746). Also phosphorylated at Thr-292 by MAPK1/ERK2 and at Ser-298 by PAK (PubMed:16129686). MAPK1/ERK2 phosphorylation of Thr-292 occurs in response to cellular adhesion and leads to inhibition of Ser-298 phosphorylation by PAK (PubMed:16129686). Autophosphorylated at Ser-218 and Ser-222, autophosphosphorylation is promoted by NEK10 following UV irradiation (PubMed:20956560).</text>
</comment>
<comment type="PTM">
    <text evidence="14">(Microbial infection) Acetylation by Yersinia YopJ prevents phosphorylation and activation, thus blocking the MAPK signaling pathway.</text>
</comment>
<comment type="disease" evidence="13 17">
    <disease id="DI-03780">
        <name>Cardiofaciocutaneous syndrome 3</name>
        <acronym>CFC3</acronym>
        <description>A form of cardiofaciocutaneous syndrome, a multiple congenital anomaly disorder characterized by a distinctive facial appearance, heart defects and intellectual disability. Heart defects include pulmonic stenosis, atrial septal defects and hypertrophic cardiomyopathy. Some affected individuals present with ectodermal abnormalities such as sparse, friable hair, hyperkeratotic skin lesions and a generalized ichthyosis-like condition. Typical facial features are similar to Noonan syndrome. They include high forehead with bitemporal constriction, hypoplastic supraorbital ridges, downslanting palpebral fissures, a depressed nasal bridge, and posteriorly angulated ears with prominent helices. Distinctive features of CFC3 include macrostomia and horizontal shape of palpebral fissures.</description>
        <dbReference type="MIM" id="615279"/>
    </disease>
    <text>The disease is caused by variants affecting the gene represented in this entry.</text>
</comment>
<comment type="disease" evidence="30">
    <disease id="DI-01963">
        <name>Melorheostosis, isolated</name>
        <acronym>MEL</acronym>
        <description>A sclerosing bone disorder characterized by hyperostosis of the cortex of tubular bones, frequently involving one limb. The lesions may be accompanied by abnormalities of adjacent soft tissue, joint contractures, sclerodermatous skin lesions, muscle atrophy, or hemangioma.</description>
        <dbReference type="MIM" id="155950"/>
    </disease>
    <text>The disease is caused by variants affecting the gene represented in this entry.</text>
</comment>
<comment type="similarity">
    <text evidence="36">Belongs to the protein kinase superfamily. STE Ser/Thr protein kinase family. MAP kinase kinase subfamily.</text>
</comment>
<evidence type="ECO:0000250" key="1"/>
<evidence type="ECO:0000250" key="2">
    <source>
        <dbReference type="UniProtKB" id="P29678"/>
    </source>
</evidence>
<evidence type="ECO:0000250" key="3">
    <source>
        <dbReference type="UniProtKB" id="P31938"/>
    </source>
</evidence>
<evidence type="ECO:0000250" key="4">
    <source>
        <dbReference type="UniProtKB" id="Q01986"/>
    </source>
</evidence>
<evidence type="ECO:0000255" key="5">
    <source>
        <dbReference type="PROSITE-ProRule" id="PRU00159"/>
    </source>
</evidence>
<evidence type="ECO:0000255" key="6">
    <source>
        <dbReference type="PROSITE-ProRule" id="PRU10027"/>
    </source>
</evidence>
<evidence type="ECO:0000256" key="7">
    <source>
        <dbReference type="SAM" id="MobiDB-lite"/>
    </source>
</evidence>
<evidence type="ECO:0000269" key="8">
    <source>
    </source>
</evidence>
<evidence type="ECO:0000269" key="9">
    <source>
    </source>
</evidence>
<evidence type="ECO:0000269" key="10">
    <source>
    </source>
</evidence>
<evidence type="ECO:0000269" key="11">
    <source>
    </source>
</evidence>
<evidence type="ECO:0000269" key="12">
    <source>
    </source>
</evidence>
<evidence type="ECO:0000269" key="13">
    <source>
    </source>
</evidence>
<evidence type="ECO:0000269" key="14">
    <source>
    </source>
</evidence>
<evidence type="ECO:0000269" key="15">
    <source>
    </source>
</evidence>
<evidence type="ECO:0000269" key="16">
    <source>
    </source>
</evidence>
<evidence type="ECO:0000269" key="17">
    <source>
    </source>
</evidence>
<evidence type="ECO:0000269" key="18">
    <source>
    </source>
</evidence>
<evidence type="ECO:0000269" key="19">
    <source>
    </source>
</evidence>
<evidence type="ECO:0000269" key="20">
    <source>
    </source>
</evidence>
<evidence type="ECO:0000269" key="21">
    <source>
    </source>
</evidence>
<evidence type="ECO:0000269" key="22">
    <source>
    </source>
</evidence>
<evidence type="ECO:0000269" key="23">
    <source>
    </source>
</evidence>
<evidence type="ECO:0000269" key="24">
    <source>
    </source>
</evidence>
<evidence type="ECO:0000269" key="25">
    <source>
    </source>
</evidence>
<evidence type="ECO:0000269" key="26">
    <source>
    </source>
</evidence>
<evidence type="ECO:0000269" key="27">
    <source>
    </source>
</evidence>
<evidence type="ECO:0000269" key="28">
    <source>
    </source>
</evidence>
<evidence type="ECO:0000269" key="29">
    <source>
    </source>
</evidence>
<evidence type="ECO:0000269" key="30">
    <source>
    </source>
</evidence>
<evidence type="ECO:0000269" key="31">
    <source>
    </source>
</evidence>
<evidence type="ECO:0000269" key="32">
    <source>
    </source>
</evidence>
<evidence type="ECO:0000269" key="33">
    <source>
    </source>
</evidence>
<evidence type="ECO:0000269" key="34">
    <source>
    </source>
</evidence>
<evidence type="ECO:0000303" key="35">
    <source>
    </source>
</evidence>
<evidence type="ECO:0000305" key="36"/>
<evidence type="ECO:0000312" key="37">
    <source>
        <dbReference type="HGNC" id="HGNC:6840"/>
    </source>
</evidence>
<evidence type="ECO:0007744" key="38">
    <source>
        <dbReference type="PDB" id="1S9J"/>
    </source>
</evidence>
<evidence type="ECO:0007744" key="39">
    <source>
        <dbReference type="PDB" id="2P55"/>
    </source>
</evidence>
<evidence type="ECO:0007744" key="40">
    <source>
        <dbReference type="PDB" id="3DV3"/>
    </source>
</evidence>
<evidence type="ECO:0007744" key="41">
    <source>
        <dbReference type="PDB" id="3DY7"/>
    </source>
</evidence>
<evidence type="ECO:0007744" key="42">
    <source>
        <dbReference type="PDB" id="3E8N"/>
    </source>
</evidence>
<evidence type="ECO:0007744" key="43">
    <source>
        <dbReference type="PDB" id="3EQB"/>
    </source>
</evidence>
<evidence type="ECO:0007744" key="44">
    <source>
        <dbReference type="PDB" id="3EQC"/>
    </source>
</evidence>
<evidence type="ECO:0007744" key="45">
    <source>
        <dbReference type="PDB" id="3EQD"/>
    </source>
</evidence>
<evidence type="ECO:0007744" key="46">
    <source>
        <dbReference type="PDB" id="3EQF"/>
    </source>
</evidence>
<evidence type="ECO:0007744" key="47">
    <source>
        <dbReference type="PDB" id="3EQG"/>
    </source>
</evidence>
<evidence type="ECO:0007744" key="48">
    <source>
        <dbReference type="PDB" id="3EQH"/>
    </source>
</evidence>
<evidence type="ECO:0007744" key="49">
    <source>
        <dbReference type="PDB" id="3EQI"/>
    </source>
</evidence>
<evidence type="ECO:0007744" key="50">
    <source>
        <dbReference type="PDB" id="3MBL"/>
    </source>
</evidence>
<evidence type="ECO:0007744" key="51">
    <source>
        <dbReference type="PDB" id="3ORN"/>
    </source>
</evidence>
<evidence type="ECO:0007744" key="52">
    <source>
        <dbReference type="PDB" id="3OS3"/>
    </source>
</evidence>
<evidence type="ECO:0007744" key="53">
    <source>
        <dbReference type="PDB" id="3PP1"/>
    </source>
</evidence>
<evidence type="ECO:0007744" key="54">
    <source>
    </source>
</evidence>
<evidence type="ECO:0007829" key="55">
    <source>
        <dbReference type="PDB" id="3DY7"/>
    </source>
</evidence>
<evidence type="ECO:0007829" key="56">
    <source>
        <dbReference type="PDB" id="3EQC"/>
    </source>
</evidence>
<evidence type="ECO:0007829" key="57">
    <source>
        <dbReference type="PDB" id="3VVH"/>
    </source>
</evidence>
<evidence type="ECO:0007829" key="58">
    <source>
        <dbReference type="PDB" id="3ZLY"/>
    </source>
</evidence>
<evidence type="ECO:0007829" key="59">
    <source>
        <dbReference type="PDB" id="4AN3"/>
    </source>
</evidence>
<evidence type="ECO:0007829" key="60">
    <source>
        <dbReference type="PDB" id="7B7R"/>
    </source>
</evidence>
<evidence type="ECO:0007829" key="61">
    <source>
        <dbReference type="PDB" id="7B9L"/>
    </source>
</evidence>